<evidence type="ECO:0000250" key="1">
    <source>
        <dbReference type="UniProtKB" id="P41245"/>
    </source>
</evidence>
<evidence type="ECO:0000255" key="2"/>
<evidence type="ECO:0000255" key="3">
    <source>
        <dbReference type="PROSITE-ProRule" id="PRU00479"/>
    </source>
</evidence>
<evidence type="ECO:0000256" key="4">
    <source>
        <dbReference type="SAM" id="MobiDB-lite"/>
    </source>
</evidence>
<evidence type="ECO:0000269" key="5">
    <source>
    </source>
</evidence>
<evidence type="ECO:0000269" key="6">
    <source>
    </source>
</evidence>
<evidence type="ECO:0000269" key="7">
    <source>
    </source>
</evidence>
<evidence type="ECO:0000269" key="8">
    <source>
    </source>
</evidence>
<evidence type="ECO:0000269" key="9">
    <source>
    </source>
</evidence>
<evidence type="ECO:0000269" key="10">
    <source>
    </source>
</evidence>
<evidence type="ECO:0000269" key="11">
    <source>
    </source>
</evidence>
<evidence type="ECO:0000269" key="12">
    <source>
    </source>
</evidence>
<evidence type="ECO:0000269" key="13">
    <source>
    </source>
</evidence>
<evidence type="ECO:0000269" key="14">
    <source>
    </source>
</evidence>
<evidence type="ECO:0000269" key="15">
    <source>
    </source>
</evidence>
<evidence type="ECO:0000269" key="16">
    <source>
    </source>
</evidence>
<evidence type="ECO:0000269" key="17">
    <source>
    </source>
</evidence>
<evidence type="ECO:0000269" key="18">
    <source>
    </source>
</evidence>
<evidence type="ECO:0000269" key="19">
    <source>
    </source>
</evidence>
<evidence type="ECO:0000269" key="20">
    <source>
    </source>
</evidence>
<evidence type="ECO:0000269" key="21">
    <source>
    </source>
</evidence>
<evidence type="ECO:0000269" key="22">
    <source>
    </source>
</evidence>
<evidence type="ECO:0000269" key="23">
    <source>
    </source>
</evidence>
<evidence type="ECO:0000269" key="24">
    <source>
    </source>
</evidence>
<evidence type="ECO:0000269" key="25">
    <source>
    </source>
</evidence>
<evidence type="ECO:0000269" key="26">
    <source>
    </source>
</evidence>
<evidence type="ECO:0000269" key="27">
    <source>
    </source>
</evidence>
<evidence type="ECO:0000269" key="28">
    <source>
    </source>
</evidence>
<evidence type="ECO:0000269" key="29">
    <source>
    </source>
</evidence>
<evidence type="ECO:0000269" key="30">
    <source>
    </source>
</evidence>
<evidence type="ECO:0000269" key="31">
    <source ref="4"/>
</evidence>
<evidence type="ECO:0000269" key="32">
    <source ref="5"/>
</evidence>
<evidence type="ECO:0000303" key="33">
    <source>
    </source>
</evidence>
<evidence type="ECO:0000303" key="34">
    <source>
    </source>
</evidence>
<evidence type="ECO:0000303" key="35">
    <source>
    </source>
</evidence>
<evidence type="ECO:0000305" key="36"/>
<evidence type="ECO:0000305" key="37">
    <source>
    </source>
</evidence>
<evidence type="ECO:0007829" key="38">
    <source>
        <dbReference type="PDB" id="1ITV"/>
    </source>
</evidence>
<evidence type="ECO:0007829" key="39">
    <source>
        <dbReference type="PDB" id="1L6J"/>
    </source>
</evidence>
<evidence type="ECO:0007829" key="40">
    <source>
        <dbReference type="PDB" id="4H2E"/>
    </source>
</evidence>
<evidence type="ECO:0007829" key="41">
    <source>
        <dbReference type="PDB" id="4JIJ"/>
    </source>
</evidence>
<evidence type="ECO:0007829" key="42">
    <source>
        <dbReference type="PDB" id="4WZV"/>
    </source>
</evidence>
<evidence type="ECO:0007829" key="43">
    <source>
        <dbReference type="PDB" id="5UE3"/>
    </source>
</evidence>
<evidence type="ECO:0007829" key="44">
    <source>
        <dbReference type="PDB" id="6ESM"/>
    </source>
</evidence>
<gene>
    <name type="primary">MMP9</name>
    <name type="synonym">CLG4B</name>
</gene>
<protein>
    <recommendedName>
        <fullName>Matrix metalloproteinase-9</fullName>
        <shortName>MMP-9</shortName>
        <ecNumber evidence="17">3.4.24.35</ecNumber>
    </recommendedName>
    <alternativeName>
        <fullName>92 kDa gelatinase</fullName>
    </alternativeName>
    <alternativeName>
        <fullName evidence="35">92 kDa type IV collagenase</fullName>
    </alternativeName>
    <alternativeName>
        <fullName>Gelatinase B</fullName>
        <shortName>GELB</shortName>
    </alternativeName>
    <component>
        <recommendedName>
            <fullName evidence="34">67 kDa matrix metalloproteinase-9</fullName>
        </recommendedName>
    </component>
    <component>
        <recommendedName>
            <fullName evidence="34">82 kDa matrix metalloproteinase-9</fullName>
        </recommendedName>
    </component>
</protein>
<accession>P14780</accession>
<accession>B2R7V9</accession>
<accession>Q3LR70</accession>
<accession>Q8N725</accession>
<accession>Q9H4Z1</accession>
<accession>Q9UCJ9</accession>
<accession>Q9UCL1</accession>
<accession>Q9UDK2</accession>
<dbReference type="EC" id="3.4.24.35" evidence="17"/>
<dbReference type="EMBL" id="J05070">
    <property type="protein sequence ID" value="AAA51539.1"/>
    <property type="molecule type" value="mRNA"/>
</dbReference>
<dbReference type="EMBL" id="M68343">
    <property type="status" value="NOT_ANNOTATED_CDS"/>
    <property type="molecule type" value="Genomic_DNA"/>
</dbReference>
<dbReference type="EMBL" id="M68344">
    <property type="status" value="NOT_ANNOTATED_CDS"/>
    <property type="molecule type" value="Genomic_DNA"/>
</dbReference>
<dbReference type="EMBL" id="M68345">
    <property type="status" value="NOT_ANNOTATED_CDS"/>
    <property type="molecule type" value="Genomic_DNA"/>
</dbReference>
<dbReference type="EMBL" id="M68346">
    <property type="status" value="NOT_ANNOTATED_CDS"/>
    <property type="molecule type" value="Genomic_DNA"/>
</dbReference>
<dbReference type="EMBL" id="M68347">
    <property type="status" value="NOT_ANNOTATED_CDS"/>
    <property type="molecule type" value="Genomic_DNA"/>
</dbReference>
<dbReference type="EMBL" id="M68348">
    <property type="status" value="NOT_ANNOTATED_CDS"/>
    <property type="molecule type" value="Genomic_DNA"/>
</dbReference>
<dbReference type="EMBL" id="M68349">
    <property type="status" value="NOT_ANNOTATED_CDS"/>
    <property type="molecule type" value="Genomic_DNA"/>
</dbReference>
<dbReference type="EMBL" id="M68350">
    <property type="status" value="NOT_ANNOTATED_CDS"/>
    <property type="molecule type" value="Genomic_DNA"/>
</dbReference>
<dbReference type="EMBL" id="M68351">
    <property type="status" value="NOT_ANNOTATED_CDS"/>
    <property type="molecule type" value="Genomic_DNA"/>
</dbReference>
<dbReference type="EMBL" id="M68352">
    <property type="status" value="NOT_ANNOTATED_CDS"/>
    <property type="molecule type" value="Genomic_DNA"/>
</dbReference>
<dbReference type="EMBL" id="M68353">
    <property type="status" value="NOT_ANNOTATED_CDS"/>
    <property type="molecule type" value="Genomic_DNA"/>
</dbReference>
<dbReference type="EMBL" id="M68354">
    <property type="status" value="NOT_ANNOTATED_CDS"/>
    <property type="molecule type" value="Genomic_DNA"/>
</dbReference>
<dbReference type="EMBL" id="M68355">
    <property type="status" value="NOT_ANNOTATED_CDS"/>
    <property type="molecule type" value="Genomic_DNA"/>
</dbReference>
<dbReference type="EMBL" id="AK313137">
    <property type="protein sequence ID" value="BAG35956.1"/>
    <property type="molecule type" value="mRNA"/>
</dbReference>
<dbReference type="EMBL" id="AF538844">
    <property type="protein sequence ID" value="AAM97934.1"/>
    <property type="molecule type" value="Genomic_DNA"/>
</dbReference>
<dbReference type="EMBL" id="DQ194553">
    <property type="protein sequence ID" value="ABA03169.1"/>
    <property type="molecule type" value="Genomic_DNA"/>
</dbReference>
<dbReference type="EMBL" id="AL162458">
    <property type="status" value="NOT_ANNOTATED_CDS"/>
    <property type="molecule type" value="Genomic_DNA"/>
</dbReference>
<dbReference type="EMBL" id="BC006093">
    <property type="protein sequence ID" value="AAH06093.1"/>
    <property type="molecule type" value="mRNA"/>
</dbReference>
<dbReference type="EMBL" id="D10051">
    <property type="protein sequence ID" value="BAA20967.1"/>
    <property type="molecule type" value="Genomic_DNA"/>
</dbReference>
<dbReference type="CCDS" id="CCDS13390.1"/>
<dbReference type="PIR" id="A34458">
    <property type="entry name" value="A34458"/>
</dbReference>
<dbReference type="RefSeq" id="NP_004985.2">
    <property type="nucleotide sequence ID" value="NM_004994.3"/>
</dbReference>
<dbReference type="PDB" id="1GKC">
    <property type="method" value="X-ray"/>
    <property type="resolution" value="2.30 A"/>
    <property type="chains" value="A/B=107-443"/>
</dbReference>
<dbReference type="PDB" id="1GKD">
    <property type="method" value="X-ray"/>
    <property type="resolution" value="2.10 A"/>
    <property type="chains" value="A/B=107-443"/>
</dbReference>
<dbReference type="PDB" id="1ITV">
    <property type="method" value="X-ray"/>
    <property type="resolution" value="1.95 A"/>
    <property type="chains" value="A/B=513-707"/>
</dbReference>
<dbReference type="PDB" id="1L6J">
    <property type="method" value="X-ray"/>
    <property type="resolution" value="2.50 A"/>
    <property type="chains" value="A=20-444"/>
</dbReference>
<dbReference type="PDB" id="2OVX">
    <property type="method" value="X-ray"/>
    <property type="resolution" value="2.00 A"/>
    <property type="chains" value="A/B=110-443"/>
</dbReference>
<dbReference type="PDB" id="2OVZ">
    <property type="method" value="X-ray"/>
    <property type="resolution" value="2.00 A"/>
    <property type="chains" value="A/B=110-443"/>
</dbReference>
<dbReference type="PDB" id="2OW0">
    <property type="method" value="X-ray"/>
    <property type="resolution" value="2.00 A"/>
    <property type="chains" value="A/B=110-443"/>
</dbReference>
<dbReference type="PDB" id="2OW1">
    <property type="method" value="X-ray"/>
    <property type="resolution" value="2.20 A"/>
    <property type="chains" value="A/B=110-443"/>
</dbReference>
<dbReference type="PDB" id="2OW2">
    <property type="method" value="X-ray"/>
    <property type="resolution" value="2.90 A"/>
    <property type="chains" value="A/B=110-443"/>
</dbReference>
<dbReference type="PDB" id="4H1Q">
    <property type="method" value="X-ray"/>
    <property type="resolution" value="1.59 A"/>
    <property type="chains" value="A/B=110-214, A/B=391-444"/>
</dbReference>
<dbReference type="PDB" id="4H2E">
    <property type="method" value="X-ray"/>
    <property type="resolution" value="2.90 A"/>
    <property type="chains" value="A/B=107-216, A/B=392-444"/>
</dbReference>
<dbReference type="PDB" id="4H3X">
    <property type="method" value="X-ray"/>
    <property type="resolution" value="1.76 A"/>
    <property type="chains" value="A/B=107-216, A/B=392-444"/>
</dbReference>
<dbReference type="PDB" id="4H82">
    <property type="method" value="X-ray"/>
    <property type="resolution" value="1.90 A"/>
    <property type="chains" value="A/B/C/D=110-444"/>
</dbReference>
<dbReference type="PDB" id="4HMA">
    <property type="method" value="X-ray"/>
    <property type="resolution" value="1.94 A"/>
    <property type="chains" value="A/B=110-214, A/B=391-444"/>
</dbReference>
<dbReference type="PDB" id="4JIJ">
    <property type="method" value="X-ray"/>
    <property type="resolution" value="1.70 A"/>
    <property type="chains" value="A/B=107-444"/>
</dbReference>
<dbReference type="PDB" id="4JQG">
    <property type="method" value="X-ray"/>
    <property type="resolution" value="1.85 A"/>
    <property type="chains" value="A/B=107-444"/>
</dbReference>
<dbReference type="PDB" id="4WZV">
    <property type="method" value="X-ray"/>
    <property type="resolution" value="1.65 A"/>
    <property type="chains" value="A/B=110-444"/>
</dbReference>
<dbReference type="PDB" id="4XCT">
    <property type="method" value="X-ray"/>
    <property type="resolution" value="1.30 A"/>
    <property type="chains" value="A=113-444"/>
</dbReference>
<dbReference type="PDB" id="5CUH">
    <property type="method" value="X-ray"/>
    <property type="resolution" value="1.83 A"/>
    <property type="chains" value="A/B=107-444"/>
</dbReference>
<dbReference type="PDB" id="5I12">
    <property type="method" value="X-ray"/>
    <property type="resolution" value="1.59 A"/>
    <property type="chains" value="A=113-444"/>
</dbReference>
<dbReference type="PDB" id="5TH6">
    <property type="method" value="X-ray"/>
    <property type="resolution" value="1.70 A"/>
    <property type="chains" value="A/B/C/D=40-443"/>
</dbReference>
<dbReference type="PDB" id="5TH9">
    <property type="method" value="X-ray"/>
    <property type="resolution" value="3.00 A"/>
    <property type="chains" value="A/B/C=40-443"/>
</dbReference>
<dbReference type="PDB" id="5UE3">
    <property type="method" value="X-ray"/>
    <property type="resolution" value="1.60 A"/>
    <property type="chains" value="A/B=35-445"/>
</dbReference>
<dbReference type="PDB" id="5UE4">
    <property type="method" value="X-ray"/>
    <property type="resolution" value="1.80 A"/>
    <property type="chains" value="A/B=35-445"/>
</dbReference>
<dbReference type="PDB" id="6ESM">
    <property type="method" value="X-ray"/>
    <property type="resolution" value="1.10 A"/>
    <property type="chains" value="A=110-227"/>
</dbReference>
<dbReference type="PDB" id="8K5V">
    <property type="method" value="X-ray"/>
    <property type="resolution" value="1.70 A"/>
    <property type="chains" value="A/B=28-444"/>
</dbReference>
<dbReference type="PDB" id="8K5W">
    <property type="method" value="X-ray"/>
    <property type="resolution" value="2.00 A"/>
    <property type="chains" value="A/B=28-444"/>
</dbReference>
<dbReference type="PDB" id="8K5X">
    <property type="method" value="X-ray"/>
    <property type="resolution" value="1.90 A"/>
    <property type="chains" value="A/B=28-444"/>
</dbReference>
<dbReference type="PDB" id="8K5Y">
    <property type="method" value="X-ray"/>
    <property type="resolution" value="1.52 A"/>
    <property type="chains" value="A/B=28-444"/>
</dbReference>
<dbReference type="PDBsum" id="1GKC"/>
<dbReference type="PDBsum" id="1GKD"/>
<dbReference type="PDBsum" id="1ITV"/>
<dbReference type="PDBsum" id="1L6J"/>
<dbReference type="PDBsum" id="2OVX"/>
<dbReference type="PDBsum" id="2OVZ"/>
<dbReference type="PDBsum" id="2OW0"/>
<dbReference type="PDBsum" id="2OW1"/>
<dbReference type="PDBsum" id="2OW2"/>
<dbReference type="PDBsum" id="4H1Q"/>
<dbReference type="PDBsum" id="4H2E"/>
<dbReference type="PDBsum" id="4H3X"/>
<dbReference type="PDBsum" id="4H82"/>
<dbReference type="PDBsum" id="4HMA"/>
<dbReference type="PDBsum" id="4JIJ"/>
<dbReference type="PDBsum" id="4JQG"/>
<dbReference type="PDBsum" id="4WZV"/>
<dbReference type="PDBsum" id="4XCT"/>
<dbReference type="PDBsum" id="5CUH"/>
<dbReference type="PDBsum" id="5I12"/>
<dbReference type="PDBsum" id="5TH6"/>
<dbReference type="PDBsum" id="5TH9"/>
<dbReference type="PDBsum" id="5UE3"/>
<dbReference type="PDBsum" id="5UE4"/>
<dbReference type="PDBsum" id="6ESM"/>
<dbReference type="PDBsum" id="8K5V"/>
<dbReference type="PDBsum" id="8K5W"/>
<dbReference type="PDBsum" id="8K5X"/>
<dbReference type="PDBsum" id="8K5Y"/>
<dbReference type="SMR" id="P14780"/>
<dbReference type="BioGRID" id="110461">
    <property type="interactions" value="51"/>
</dbReference>
<dbReference type="CORUM" id="P14780"/>
<dbReference type="DIP" id="DIP-29518N"/>
<dbReference type="FunCoup" id="P14780">
    <property type="interactions" value="523"/>
</dbReference>
<dbReference type="IntAct" id="P14780">
    <property type="interactions" value="31"/>
</dbReference>
<dbReference type="MINT" id="P14780"/>
<dbReference type="STRING" id="9606.ENSP00000361405"/>
<dbReference type="BindingDB" id="P14780"/>
<dbReference type="ChEMBL" id="CHEMBL321"/>
<dbReference type="DrugBank" id="DB07246">
    <property type="generic name" value="(2R)-2-AMINO-3,3,3-TRIFLUORO-N-HYDROXY-2-{[(4-PHENOXYPHENYL)SULFONYL]METHYL}PROPANAMIDE"/>
</dbReference>
<dbReference type="DrugBank" id="DB07145">
    <property type="generic name" value="(2R)-N-HYDROXY-2-[(3S)-3-METHYL-3-{4-[(2-METHYLQUINOLIN-4-YL)METHOXY]PHENYL}-2-OXOPYRROLIDIN-1-YL]PROPANAMIDE"/>
</dbReference>
<dbReference type="DrugBank" id="DB07285">
    <property type="generic name" value="(3R)-4,4-DIFLUORO-3-[(4-METHOXYPHENYL)SULFONYL]BUTANOIC ACID"/>
</dbReference>
<dbReference type="DrugBank" id="DB01949">
    <property type="generic name" value="2-Amino-N,3,3-Trimethylbutanamide"/>
</dbReference>
<dbReference type="DrugBank" id="DB03683">
    <property type="generic name" value="2-{[Formyl(Hydroxy)Amino]Methyl}-4-Methylpentanoic Acid"/>
</dbReference>
<dbReference type="DrugBank" id="DB07117">
    <property type="generic name" value="5-(4-PHENOXYPHENYL)-5-(4-PYRIMIDIN-2-YLPIPERAZIN-1-YL)PYRIMIDINE-2,4,6(2H,3H)-TRIONE"/>
</dbReference>
<dbReference type="DrugBank" id="DB01197">
    <property type="generic name" value="Captopril"/>
</dbReference>
<dbReference type="DrugBank" id="DB07556">
    <property type="generic name" value="CGS-27023"/>
</dbReference>
<dbReference type="DrugBank" id="DB08490">
    <property type="generic name" value="CTS-1027"/>
</dbReference>
<dbReference type="DrugBank" id="DB11672">
    <property type="generic name" value="Curcumin"/>
</dbReference>
<dbReference type="DrugBank" id="DB06423">
    <property type="generic name" value="Endostatin"/>
</dbReference>
<dbReference type="DrugBank" id="DB00143">
    <property type="generic name" value="Glutathione"/>
</dbReference>
<dbReference type="DrugBank" id="DB02255">
    <property type="generic name" value="Ilomastat"/>
</dbReference>
<dbReference type="DrugBank" id="DB00786">
    <property type="generic name" value="Marimastat"/>
</dbReference>
<dbReference type="DrugBank" id="DB01017">
    <property type="generic name" value="Minocycline"/>
</dbReference>
<dbReference type="DrugBank" id="DB07926">
    <property type="generic name" value="N-[3-(N'-HYDROXYCARBOXAMIDO)-2-(2-METHYLPROPYL)-PROPANOYL]-O-TYROSINE-N-METHYLAMIDE"/>
</dbReference>
<dbReference type="DrugBank" id="DB05387">
    <property type="generic name" value="Neovastat"/>
</dbReference>
<dbReference type="DrugBank" id="DB12843">
    <property type="generic name" value="Oleandrin"/>
</dbReference>
<dbReference type="DrugBank" id="DB05495">
    <property type="generic name" value="PG-530742"/>
</dbReference>
<dbReference type="DrugBank" id="DB01593">
    <property type="generic name" value="Zinc"/>
</dbReference>
<dbReference type="DrugBank" id="DB14487">
    <property type="generic name" value="Zinc acetate"/>
</dbReference>
<dbReference type="DrugBank" id="DB14533">
    <property type="generic name" value="Zinc chloride"/>
</dbReference>
<dbReference type="DrugBank" id="DB14548">
    <property type="generic name" value="Zinc sulfate, unspecified form"/>
</dbReference>
<dbReference type="DrugCentral" id="P14780"/>
<dbReference type="GuidetoPHARMACOLOGY" id="1633"/>
<dbReference type="MEROPS" id="M10.004"/>
<dbReference type="GlyConnect" id="6">
    <property type="glycosylation" value="1 N-Linked glycan (1 site), 19 O-Linked glycans"/>
</dbReference>
<dbReference type="GlyCosmos" id="P14780">
    <property type="glycosylation" value="3 sites, 30 glycans"/>
</dbReference>
<dbReference type="GlyGen" id="P14780">
    <property type="glycosylation" value="10 sites, 11 N-linked glycans (2 sites), 28 O-linked glycans (1 site)"/>
</dbReference>
<dbReference type="iPTMnet" id="P14780"/>
<dbReference type="PhosphoSitePlus" id="P14780"/>
<dbReference type="BioMuta" id="MMP9"/>
<dbReference type="DMDM" id="269849668"/>
<dbReference type="jPOST" id="P14780"/>
<dbReference type="MassIVE" id="P14780"/>
<dbReference type="PaxDb" id="9606-ENSP00000361405"/>
<dbReference type="PeptideAtlas" id="P14780"/>
<dbReference type="PRIDE" id="P14780"/>
<dbReference type="ProteomicsDB" id="53082"/>
<dbReference type="Pumba" id="P14780"/>
<dbReference type="ABCD" id="P14780">
    <property type="antibodies" value="16 sequenced antibodies"/>
</dbReference>
<dbReference type="Antibodypedia" id="774">
    <property type="antibodies" value="2067 antibodies from 54 providers"/>
</dbReference>
<dbReference type="DNASU" id="4318"/>
<dbReference type="Ensembl" id="ENST00000372330.3">
    <property type="protein sequence ID" value="ENSP00000361405.3"/>
    <property type="gene ID" value="ENSG00000100985.7"/>
</dbReference>
<dbReference type="GeneID" id="4318"/>
<dbReference type="KEGG" id="hsa:4318"/>
<dbReference type="MANE-Select" id="ENST00000372330.3">
    <property type="protein sequence ID" value="ENSP00000361405.3"/>
    <property type="RefSeq nucleotide sequence ID" value="NM_004994.3"/>
    <property type="RefSeq protein sequence ID" value="NP_004985.2"/>
</dbReference>
<dbReference type="UCSC" id="uc002xqz.3">
    <property type="organism name" value="human"/>
</dbReference>
<dbReference type="AGR" id="HGNC:7176"/>
<dbReference type="CTD" id="4318"/>
<dbReference type="DisGeNET" id="4318"/>
<dbReference type="GeneCards" id="MMP9"/>
<dbReference type="HGNC" id="HGNC:7176">
    <property type="gene designation" value="MMP9"/>
</dbReference>
<dbReference type="HPA" id="ENSG00000100985">
    <property type="expression patterns" value="Group enriched (bone marrow, lymphoid tissue)"/>
</dbReference>
<dbReference type="MalaCards" id="MMP9"/>
<dbReference type="MIM" id="120361">
    <property type="type" value="gene"/>
</dbReference>
<dbReference type="MIM" id="603932">
    <property type="type" value="phenotype"/>
</dbReference>
<dbReference type="MIM" id="613073">
    <property type="type" value="phenotype"/>
</dbReference>
<dbReference type="neXtProt" id="NX_P14780"/>
<dbReference type="OpenTargets" id="ENSG00000100985"/>
<dbReference type="Orphanet" id="1040">
    <property type="disease" value="Metaphyseal anadysplasia"/>
</dbReference>
<dbReference type="PharmGKB" id="PA30889"/>
<dbReference type="VEuPathDB" id="HostDB:ENSG00000100985"/>
<dbReference type="eggNOG" id="KOG1565">
    <property type="taxonomic scope" value="Eukaryota"/>
</dbReference>
<dbReference type="GeneTree" id="ENSGT00940000157415"/>
<dbReference type="HOGENOM" id="CLU_015489_6_2_1"/>
<dbReference type="InParanoid" id="P14780"/>
<dbReference type="OMA" id="REKAYFC"/>
<dbReference type="OrthoDB" id="406838at2759"/>
<dbReference type="PAN-GO" id="P14780">
    <property type="GO annotations" value="3 GO annotations based on evolutionary models"/>
</dbReference>
<dbReference type="PhylomeDB" id="P14780"/>
<dbReference type="TreeFam" id="TF315428"/>
<dbReference type="BRENDA" id="3.4.24.35">
    <property type="organism ID" value="2681"/>
</dbReference>
<dbReference type="PathwayCommons" id="P14780"/>
<dbReference type="Reactome" id="R-HSA-1433557">
    <property type="pathway name" value="Signaling by SCF-KIT"/>
</dbReference>
<dbReference type="Reactome" id="R-HSA-1442490">
    <property type="pathway name" value="Collagen degradation"/>
</dbReference>
<dbReference type="Reactome" id="R-HSA-1474228">
    <property type="pathway name" value="Degradation of the extracellular matrix"/>
</dbReference>
<dbReference type="Reactome" id="R-HSA-1592389">
    <property type="pathway name" value="Activation of Matrix Metalloproteinases"/>
</dbReference>
<dbReference type="Reactome" id="R-HSA-2022090">
    <property type="pathway name" value="Assembly of collagen fibrils and other multimeric structures"/>
</dbReference>
<dbReference type="Reactome" id="R-HSA-3928665">
    <property type="pathway name" value="EPH-ephrin mediated repulsion of cells"/>
</dbReference>
<dbReference type="Reactome" id="R-HSA-6785807">
    <property type="pathway name" value="Interleukin-4 and Interleukin-13 signaling"/>
</dbReference>
<dbReference type="Reactome" id="R-HSA-6798695">
    <property type="pathway name" value="Neutrophil degranulation"/>
</dbReference>
<dbReference type="Reactome" id="R-HSA-9009391">
    <property type="pathway name" value="Extra-nuclear estrogen signaling"/>
</dbReference>
<dbReference type="SignaLink" id="P14780"/>
<dbReference type="SIGNOR" id="P14780"/>
<dbReference type="BioGRID-ORCS" id="4318">
    <property type="hits" value="9 hits in 1155 CRISPR screens"/>
</dbReference>
<dbReference type="EvolutionaryTrace" id="P14780"/>
<dbReference type="GeneWiki" id="MMP9"/>
<dbReference type="GenomeRNAi" id="4318"/>
<dbReference type="Pharos" id="P14780">
    <property type="development level" value="Tchem"/>
</dbReference>
<dbReference type="PRO" id="PR:P14780"/>
<dbReference type="Proteomes" id="UP000005640">
    <property type="component" value="Chromosome 20"/>
</dbReference>
<dbReference type="RNAct" id="P14780">
    <property type="molecule type" value="protein"/>
</dbReference>
<dbReference type="Bgee" id="ENSG00000100985">
    <property type="expression patterns" value="Expressed in periodontal ligament and 143 other cell types or tissues"/>
</dbReference>
<dbReference type="GO" id="GO:0062023">
    <property type="term" value="C:collagen-containing extracellular matrix"/>
    <property type="evidence" value="ECO:0007005"/>
    <property type="project" value="BHF-UCL"/>
</dbReference>
<dbReference type="GO" id="GO:0070062">
    <property type="term" value="C:extracellular exosome"/>
    <property type="evidence" value="ECO:0007005"/>
    <property type="project" value="UniProtKB"/>
</dbReference>
<dbReference type="GO" id="GO:0005576">
    <property type="term" value="C:extracellular region"/>
    <property type="evidence" value="ECO:0007005"/>
    <property type="project" value="BHF-UCL"/>
</dbReference>
<dbReference type="GO" id="GO:0005615">
    <property type="term" value="C:extracellular space"/>
    <property type="evidence" value="ECO:0000314"/>
    <property type="project" value="UniProtKB"/>
</dbReference>
<dbReference type="GO" id="GO:1904813">
    <property type="term" value="C:ficolin-1-rich granule lumen"/>
    <property type="evidence" value="ECO:0000304"/>
    <property type="project" value="Reactome"/>
</dbReference>
<dbReference type="GO" id="GO:1904724">
    <property type="term" value="C:tertiary granule lumen"/>
    <property type="evidence" value="ECO:0000304"/>
    <property type="project" value="Reactome"/>
</dbReference>
<dbReference type="GO" id="GO:0005518">
    <property type="term" value="F:collagen binding"/>
    <property type="evidence" value="ECO:0000304"/>
    <property type="project" value="UniProtKB"/>
</dbReference>
<dbReference type="GO" id="GO:0004175">
    <property type="term" value="F:endopeptidase activity"/>
    <property type="evidence" value="ECO:0000314"/>
    <property type="project" value="ParkinsonsUK-UCL"/>
</dbReference>
<dbReference type="GO" id="GO:0042802">
    <property type="term" value="F:identical protein binding"/>
    <property type="evidence" value="ECO:0000353"/>
    <property type="project" value="IntAct"/>
</dbReference>
<dbReference type="GO" id="GO:0004222">
    <property type="term" value="F:metalloendopeptidase activity"/>
    <property type="evidence" value="ECO:0000314"/>
    <property type="project" value="UniProtKB"/>
</dbReference>
<dbReference type="GO" id="GO:0008237">
    <property type="term" value="F:metallopeptidase activity"/>
    <property type="evidence" value="ECO:0000314"/>
    <property type="project" value="UniProtKB"/>
</dbReference>
<dbReference type="GO" id="GO:0008233">
    <property type="term" value="F:peptidase activity"/>
    <property type="evidence" value="ECO:0000314"/>
    <property type="project" value="UniProtKB"/>
</dbReference>
<dbReference type="GO" id="GO:0004252">
    <property type="term" value="F:serine-type endopeptidase activity"/>
    <property type="evidence" value="ECO:0000269"/>
    <property type="project" value="Reactome"/>
</dbReference>
<dbReference type="GO" id="GO:0008270">
    <property type="term" value="F:zinc ion binding"/>
    <property type="evidence" value="ECO:0000304"/>
    <property type="project" value="UniProtKB"/>
</dbReference>
<dbReference type="GO" id="GO:0006915">
    <property type="term" value="P:apoptotic process"/>
    <property type="evidence" value="ECO:0007669"/>
    <property type="project" value="Ensembl"/>
</dbReference>
<dbReference type="GO" id="GO:0016477">
    <property type="term" value="P:cell migration"/>
    <property type="evidence" value="ECO:0000316"/>
    <property type="project" value="ARUK-UCL"/>
</dbReference>
<dbReference type="GO" id="GO:0071222">
    <property type="term" value="P:cellular response to lipopolysaccharide"/>
    <property type="evidence" value="ECO:0000304"/>
    <property type="project" value="ARUK-UCL"/>
</dbReference>
<dbReference type="GO" id="GO:0071492">
    <property type="term" value="P:cellular response to UV-A"/>
    <property type="evidence" value="ECO:0000314"/>
    <property type="project" value="UniProtKB"/>
</dbReference>
<dbReference type="GO" id="GO:0030574">
    <property type="term" value="P:collagen catabolic process"/>
    <property type="evidence" value="ECO:0000318"/>
    <property type="project" value="GO_Central"/>
</dbReference>
<dbReference type="GO" id="GO:0007566">
    <property type="term" value="P:embryo implantation"/>
    <property type="evidence" value="ECO:0007669"/>
    <property type="project" value="Ensembl"/>
</dbReference>
<dbReference type="GO" id="GO:0035987">
    <property type="term" value="P:endodermal cell differentiation"/>
    <property type="evidence" value="ECO:0000270"/>
    <property type="project" value="UniProtKB"/>
</dbReference>
<dbReference type="GO" id="GO:0048013">
    <property type="term" value="P:ephrin receptor signaling pathway"/>
    <property type="evidence" value="ECO:0000304"/>
    <property type="project" value="Reactome"/>
</dbReference>
<dbReference type="GO" id="GO:0022617">
    <property type="term" value="P:extracellular matrix disassembly"/>
    <property type="evidence" value="ECO:0000304"/>
    <property type="project" value="Reactome"/>
</dbReference>
<dbReference type="GO" id="GO:0030198">
    <property type="term" value="P:extracellular matrix organization"/>
    <property type="evidence" value="ECO:0000318"/>
    <property type="project" value="GO_Central"/>
</dbReference>
<dbReference type="GO" id="GO:0030225">
    <property type="term" value="P:macrophage differentiation"/>
    <property type="evidence" value="ECO:0000304"/>
    <property type="project" value="UniProtKB"/>
</dbReference>
<dbReference type="GO" id="GO:0043066">
    <property type="term" value="P:negative regulation of apoptotic process"/>
    <property type="evidence" value="ECO:0000315"/>
    <property type="project" value="CACAO"/>
</dbReference>
<dbReference type="GO" id="GO:2001258">
    <property type="term" value="P:negative regulation of cation channel activity"/>
    <property type="evidence" value="ECO:0000314"/>
    <property type="project" value="UniProtKB"/>
</dbReference>
<dbReference type="GO" id="GO:2000697">
    <property type="term" value="P:negative regulation of epithelial cell differentiation involved in kidney development"/>
    <property type="evidence" value="ECO:0000250"/>
    <property type="project" value="ARUK-UCL"/>
</dbReference>
<dbReference type="GO" id="GO:2001243">
    <property type="term" value="P:negative regulation of intrinsic apoptotic signaling pathway"/>
    <property type="evidence" value="ECO:0000315"/>
    <property type="project" value="CACAO"/>
</dbReference>
<dbReference type="GO" id="GO:0043065">
    <property type="term" value="P:positive regulation of apoptotic process"/>
    <property type="evidence" value="ECO:0007669"/>
    <property type="project" value="Ensembl"/>
</dbReference>
<dbReference type="GO" id="GO:0043388">
    <property type="term" value="P:positive regulation of DNA binding"/>
    <property type="evidence" value="ECO:0000314"/>
    <property type="project" value="CACAO"/>
</dbReference>
<dbReference type="GO" id="GO:0045742">
    <property type="term" value="P:positive regulation of epidermal growth factor receptor signaling pathway"/>
    <property type="evidence" value="ECO:0000315"/>
    <property type="project" value="CACAO"/>
</dbReference>
<dbReference type="GO" id="GO:0051549">
    <property type="term" value="P:positive regulation of keratinocyte migration"/>
    <property type="evidence" value="ECO:0000315"/>
    <property type="project" value="BHF-UCL"/>
</dbReference>
<dbReference type="GO" id="GO:0001934">
    <property type="term" value="P:positive regulation of protein phosphorylation"/>
    <property type="evidence" value="ECO:0000315"/>
    <property type="project" value="CACAO"/>
</dbReference>
<dbReference type="GO" id="GO:1900122">
    <property type="term" value="P:positive regulation of receptor binding"/>
    <property type="evidence" value="ECO:0000314"/>
    <property type="project" value="UniProtKB"/>
</dbReference>
<dbReference type="GO" id="GO:0090200">
    <property type="term" value="P:positive regulation of release of cytochrome c from mitochondria"/>
    <property type="evidence" value="ECO:0000315"/>
    <property type="project" value="CACAO"/>
</dbReference>
<dbReference type="GO" id="GO:1904707">
    <property type="term" value="P:positive regulation of vascular associated smooth muscle cell proliferation"/>
    <property type="evidence" value="ECO:0000315"/>
    <property type="project" value="BHF-UCL"/>
</dbReference>
<dbReference type="GO" id="GO:0006508">
    <property type="term" value="P:proteolysis"/>
    <property type="evidence" value="ECO:0000314"/>
    <property type="project" value="UniProtKB"/>
</dbReference>
<dbReference type="GO" id="GO:0150077">
    <property type="term" value="P:regulation of neuroinflammatory response"/>
    <property type="evidence" value="ECO:0000304"/>
    <property type="project" value="ARUK-UCL"/>
</dbReference>
<dbReference type="GO" id="GO:1904645">
    <property type="term" value="P:response to amyloid-beta"/>
    <property type="evidence" value="ECO:0000250"/>
    <property type="project" value="ARUK-UCL"/>
</dbReference>
<dbReference type="GO" id="GO:0001501">
    <property type="term" value="P:skeletal system development"/>
    <property type="evidence" value="ECO:0007669"/>
    <property type="project" value="Ensembl"/>
</dbReference>
<dbReference type="CDD" id="cd00062">
    <property type="entry name" value="FN2"/>
    <property type="match status" value="3"/>
</dbReference>
<dbReference type="CDD" id="cd00094">
    <property type="entry name" value="HX"/>
    <property type="match status" value="1"/>
</dbReference>
<dbReference type="CDD" id="cd04278">
    <property type="entry name" value="ZnMc_MMP"/>
    <property type="match status" value="1"/>
</dbReference>
<dbReference type="FunFam" id="3.40.390.10:FF:000010">
    <property type="entry name" value="72 kDa type IV collagenase"/>
    <property type="match status" value="1"/>
</dbReference>
<dbReference type="FunFam" id="2.10.10.10:FF:000001">
    <property type="entry name" value="Fibronectin 1a isoform 1"/>
    <property type="match status" value="3"/>
</dbReference>
<dbReference type="FunFam" id="2.110.10.10:FF:000011">
    <property type="entry name" value="Matrix metalloproteinase-9"/>
    <property type="match status" value="1"/>
</dbReference>
<dbReference type="Gene3D" id="3.40.390.10">
    <property type="entry name" value="Collagenase (Catalytic Domain)"/>
    <property type="match status" value="2"/>
</dbReference>
<dbReference type="Gene3D" id="2.10.10.10">
    <property type="entry name" value="Fibronectin, type II, collagen-binding"/>
    <property type="match status" value="2"/>
</dbReference>
<dbReference type="Gene3D" id="2.110.10.10">
    <property type="entry name" value="Hemopexin-like domain"/>
    <property type="match status" value="1"/>
</dbReference>
<dbReference type="InterPro" id="IPR000562">
    <property type="entry name" value="FN_type2_dom"/>
</dbReference>
<dbReference type="InterPro" id="IPR036943">
    <property type="entry name" value="FN_type2_sf"/>
</dbReference>
<dbReference type="InterPro" id="IPR000585">
    <property type="entry name" value="Hemopexin-like_dom"/>
</dbReference>
<dbReference type="InterPro" id="IPR036375">
    <property type="entry name" value="Hemopexin-like_dom_sf"/>
</dbReference>
<dbReference type="InterPro" id="IPR018487">
    <property type="entry name" value="Hemopexin-like_repeat"/>
</dbReference>
<dbReference type="InterPro" id="IPR018486">
    <property type="entry name" value="Hemopexin_CS"/>
</dbReference>
<dbReference type="InterPro" id="IPR013806">
    <property type="entry name" value="Kringle-like"/>
</dbReference>
<dbReference type="InterPro" id="IPR033739">
    <property type="entry name" value="M10A_MMP"/>
</dbReference>
<dbReference type="InterPro" id="IPR024079">
    <property type="entry name" value="MetalloPept_cat_dom_sf"/>
</dbReference>
<dbReference type="InterPro" id="IPR001818">
    <property type="entry name" value="Pept_M10_metallopeptidase"/>
</dbReference>
<dbReference type="InterPro" id="IPR021190">
    <property type="entry name" value="Pept_M10A"/>
</dbReference>
<dbReference type="InterPro" id="IPR021158">
    <property type="entry name" value="Pept_M10A_Zn_BS"/>
</dbReference>
<dbReference type="InterPro" id="IPR006026">
    <property type="entry name" value="Peptidase_Metallo"/>
</dbReference>
<dbReference type="InterPro" id="IPR036365">
    <property type="entry name" value="PGBD-like_sf"/>
</dbReference>
<dbReference type="PANTHER" id="PTHR10201">
    <property type="entry name" value="MATRIX METALLOPROTEINASE"/>
    <property type="match status" value="1"/>
</dbReference>
<dbReference type="PANTHER" id="PTHR10201:SF30">
    <property type="entry name" value="MATRIX METALLOPROTEINASE-9"/>
    <property type="match status" value="1"/>
</dbReference>
<dbReference type="Pfam" id="PF00040">
    <property type="entry name" value="fn2"/>
    <property type="match status" value="3"/>
</dbReference>
<dbReference type="Pfam" id="PF00045">
    <property type="entry name" value="Hemopexin"/>
    <property type="match status" value="4"/>
</dbReference>
<dbReference type="Pfam" id="PF00413">
    <property type="entry name" value="Peptidase_M10"/>
    <property type="match status" value="2"/>
</dbReference>
<dbReference type="PIRSF" id="PIRSF001191">
    <property type="entry name" value="Peptidase_M10A_matrix"/>
    <property type="match status" value="1"/>
</dbReference>
<dbReference type="PRINTS" id="PR00013">
    <property type="entry name" value="FNTYPEII"/>
</dbReference>
<dbReference type="PRINTS" id="PR00138">
    <property type="entry name" value="MATRIXIN"/>
</dbReference>
<dbReference type="SMART" id="SM00059">
    <property type="entry name" value="FN2"/>
    <property type="match status" value="3"/>
</dbReference>
<dbReference type="SMART" id="SM00120">
    <property type="entry name" value="HX"/>
    <property type="match status" value="4"/>
</dbReference>
<dbReference type="SMART" id="SM00235">
    <property type="entry name" value="ZnMc"/>
    <property type="match status" value="1"/>
</dbReference>
<dbReference type="SUPFAM" id="SSF50923">
    <property type="entry name" value="Hemopexin-like domain"/>
    <property type="match status" value="1"/>
</dbReference>
<dbReference type="SUPFAM" id="SSF57440">
    <property type="entry name" value="Kringle-like"/>
    <property type="match status" value="3"/>
</dbReference>
<dbReference type="SUPFAM" id="SSF55486">
    <property type="entry name" value="Metalloproteases ('zincins'), catalytic domain"/>
    <property type="match status" value="1"/>
</dbReference>
<dbReference type="SUPFAM" id="SSF47090">
    <property type="entry name" value="PGBD-like"/>
    <property type="match status" value="1"/>
</dbReference>
<dbReference type="PROSITE" id="PS00546">
    <property type="entry name" value="CYSTEINE_SWITCH"/>
    <property type="match status" value="1"/>
</dbReference>
<dbReference type="PROSITE" id="PS00023">
    <property type="entry name" value="FN2_1"/>
    <property type="match status" value="3"/>
</dbReference>
<dbReference type="PROSITE" id="PS51092">
    <property type="entry name" value="FN2_2"/>
    <property type="match status" value="3"/>
</dbReference>
<dbReference type="PROSITE" id="PS00024">
    <property type="entry name" value="HEMOPEXIN"/>
    <property type="match status" value="1"/>
</dbReference>
<dbReference type="PROSITE" id="PS51642">
    <property type="entry name" value="HEMOPEXIN_2"/>
    <property type="match status" value="4"/>
</dbReference>
<dbReference type="PROSITE" id="PS00142">
    <property type="entry name" value="ZINC_PROTEASE"/>
    <property type="match status" value="1"/>
</dbReference>
<reference key="1">
    <citation type="journal article" date="1989" name="J. Biol. Chem.">
        <title>SV40-transformed human lung fibroblasts secrete a 92-kDa type IV collagenase which is identical to that secreted by normal human macrophages.</title>
        <authorList>
            <person name="Wilhelm S.M."/>
            <person name="Collier I.E."/>
            <person name="Marmer B.L."/>
            <person name="Eisen A.Z."/>
            <person name="Grant G.A."/>
            <person name="Goldberg G.I."/>
        </authorList>
    </citation>
    <scope>NUCLEOTIDE SEQUENCE [MRNA]</scope>
    <scope>FUNCTION</scope>
    <scope>PROTEIN SEQUENCE OF 20-37</scope>
    <scope>SUBCELLULAR LOCATION</scope>
    <scope>VARIANTS ARG-279 AND PRO-574</scope>
</reference>
<reference key="2">
    <citation type="journal article" date="1991" name="J. Biol. Chem.">
        <title>Complete structure of the human gene for 92-kDa type IV collagenase. Divergent regulation of expression for the 92- and 72-kilodalton enzyme genes in HT-1080 cells.</title>
        <authorList>
            <person name="Huhtala P."/>
            <person name="Tuuttila A."/>
            <person name="Chow L.T."/>
            <person name="Lohi J."/>
            <person name="Keski-Oja J."/>
            <person name="Tryggvason K."/>
        </authorList>
    </citation>
    <scope>NUCLEOTIDE SEQUENCE [GENOMIC DNA]</scope>
</reference>
<reference key="3">
    <citation type="journal article" date="2004" name="Nat. Genet.">
        <title>Complete sequencing and characterization of 21,243 full-length human cDNAs.</title>
        <authorList>
            <person name="Ota T."/>
            <person name="Suzuki Y."/>
            <person name="Nishikawa T."/>
            <person name="Otsuki T."/>
            <person name="Sugiyama T."/>
            <person name="Irie R."/>
            <person name="Wakamatsu A."/>
            <person name="Hayashi K."/>
            <person name="Sato H."/>
            <person name="Nagai K."/>
            <person name="Kimura K."/>
            <person name="Makita H."/>
            <person name="Sekine M."/>
            <person name="Obayashi M."/>
            <person name="Nishi T."/>
            <person name="Shibahara T."/>
            <person name="Tanaka T."/>
            <person name="Ishii S."/>
            <person name="Yamamoto J."/>
            <person name="Saito K."/>
            <person name="Kawai Y."/>
            <person name="Isono Y."/>
            <person name="Nakamura Y."/>
            <person name="Nagahari K."/>
            <person name="Murakami K."/>
            <person name="Yasuda T."/>
            <person name="Iwayanagi T."/>
            <person name="Wagatsuma M."/>
            <person name="Shiratori A."/>
            <person name="Sudo H."/>
            <person name="Hosoiri T."/>
            <person name="Kaku Y."/>
            <person name="Kodaira H."/>
            <person name="Kondo H."/>
            <person name="Sugawara M."/>
            <person name="Takahashi M."/>
            <person name="Kanda K."/>
            <person name="Yokoi T."/>
            <person name="Furuya T."/>
            <person name="Kikkawa E."/>
            <person name="Omura Y."/>
            <person name="Abe K."/>
            <person name="Kamihara K."/>
            <person name="Katsuta N."/>
            <person name="Sato K."/>
            <person name="Tanikawa M."/>
            <person name="Yamazaki M."/>
            <person name="Ninomiya K."/>
            <person name="Ishibashi T."/>
            <person name="Yamashita H."/>
            <person name="Murakawa K."/>
            <person name="Fujimori K."/>
            <person name="Tanai H."/>
            <person name="Kimata M."/>
            <person name="Watanabe M."/>
            <person name="Hiraoka S."/>
            <person name="Chiba Y."/>
            <person name="Ishida S."/>
            <person name="Ono Y."/>
            <person name="Takiguchi S."/>
            <person name="Watanabe S."/>
            <person name="Yosida M."/>
            <person name="Hotuta T."/>
            <person name="Kusano J."/>
            <person name="Kanehori K."/>
            <person name="Takahashi-Fujii A."/>
            <person name="Hara H."/>
            <person name="Tanase T.-O."/>
            <person name="Nomura Y."/>
            <person name="Togiya S."/>
            <person name="Komai F."/>
            <person name="Hara R."/>
            <person name="Takeuchi K."/>
            <person name="Arita M."/>
            <person name="Imose N."/>
            <person name="Musashino K."/>
            <person name="Yuuki H."/>
            <person name="Oshima A."/>
            <person name="Sasaki N."/>
            <person name="Aotsuka S."/>
            <person name="Yoshikawa Y."/>
            <person name="Matsunawa H."/>
            <person name="Ichihara T."/>
            <person name="Shiohata N."/>
            <person name="Sano S."/>
            <person name="Moriya S."/>
            <person name="Momiyama H."/>
            <person name="Satoh N."/>
            <person name="Takami S."/>
            <person name="Terashima Y."/>
            <person name="Suzuki O."/>
            <person name="Nakagawa S."/>
            <person name="Senoh A."/>
            <person name="Mizoguchi H."/>
            <person name="Goto Y."/>
            <person name="Shimizu F."/>
            <person name="Wakebe H."/>
            <person name="Hishigaki H."/>
            <person name="Watanabe T."/>
            <person name="Sugiyama A."/>
            <person name="Takemoto M."/>
            <person name="Kawakami B."/>
            <person name="Yamazaki M."/>
            <person name="Watanabe K."/>
            <person name="Kumagai A."/>
            <person name="Itakura S."/>
            <person name="Fukuzumi Y."/>
            <person name="Fujimori Y."/>
            <person name="Komiyama M."/>
            <person name="Tashiro H."/>
            <person name="Tanigami A."/>
            <person name="Fujiwara T."/>
            <person name="Ono T."/>
            <person name="Yamada K."/>
            <person name="Fujii Y."/>
            <person name="Ozaki K."/>
            <person name="Hirao M."/>
            <person name="Ohmori Y."/>
            <person name="Kawabata A."/>
            <person name="Hikiji T."/>
            <person name="Kobatake N."/>
            <person name="Inagaki H."/>
            <person name="Ikema Y."/>
            <person name="Okamoto S."/>
            <person name="Okitani R."/>
            <person name="Kawakami T."/>
            <person name="Noguchi S."/>
            <person name="Itoh T."/>
            <person name="Shigeta K."/>
            <person name="Senba T."/>
            <person name="Matsumura K."/>
            <person name="Nakajima Y."/>
            <person name="Mizuno T."/>
            <person name="Morinaga M."/>
            <person name="Sasaki M."/>
            <person name="Togashi T."/>
            <person name="Oyama M."/>
            <person name="Hata H."/>
            <person name="Watanabe M."/>
            <person name="Komatsu T."/>
            <person name="Mizushima-Sugano J."/>
            <person name="Satoh T."/>
            <person name="Shirai Y."/>
            <person name="Takahashi Y."/>
            <person name="Nakagawa K."/>
            <person name="Okumura K."/>
            <person name="Nagase T."/>
            <person name="Nomura N."/>
            <person name="Kikuchi H."/>
            <person name="Masuho Y."/>
            <person name="Yamashita R."/>
            <person name="Nakai K."/>
            <person name="Yada T."/>
            <person name="Nakamura Y."/>
            <person name="Ohara O."/>
            <person name="Isogai T."/>
            <person name="Sugano S."/>
        </authorList>
    </citation>
    <scope>NUCLEOTIDE SEQUENCE [LARGE SCALE MRNA]</scope>
    <scope>VARIANT PRO-574</scope>
    <source>
        <tissue>Umbilical cord blood</tissue>
    </source>
</reference>
<reference key="4">
    <citation type="submission" date="2002-08" db="EMBL/GenBank/DDBJ databases">
        <authorList>
            <consortium name="SeattleSNPs variation discovery resource"/>
        </authorList>
    </citation>
    <scope>NUCLEOTIDE SEQUENCE [GENOMIC DNA]</scope>
    <scope>VARIANTS VAL-20; LYS-127; ARG-279; PRO-574 AND GLN-668</scope>
</reference>
<reference key="5">
    <citation type="submission" date="2005-09" db="EMBL/GenBank/DDBJ databases">
        <authorList>
            <consortium name="NIEHS SNPs program"/>
        </authorList>
    </citation>
    <scope>NUCLEOTIDE SEQUENCE [GENOMIC DNA]</scope>
    <scope>VARIANTS VAL-20; HIS-239; VAL-571; PRO-574 AND GLN-668</scope>
</reference>
<reference key="6">
    <citation type="journal article" date="2001" name="Nature">
        <title>The DNA sequence and comparative analysis of human chromosome 20.</title>
        <authorList>
            <person name="Deloukas P."/>
            <person name="Matthews L.H."/>
            <person name="Ashurst J.L."/>
            <person name="Burton J."/>
            <person name="Gilbert J.G.R."/>
            <person name="Jones M."/>
            <person name="Stavrides G."/>
            <person name="Almeida J.P."/>
            <person name="Babbage A.K."/>
            <person name="Bagguley C.L."/>
            <person name="Bailey J."/>
            <person name="Barlow K.F."/>
            <person name="Bates K.N."/>
            <person name="Beard L.M."/>
            <person name="Beare D.M."/>
            <person name="Beasley O.P."/>
            <person name="Bird C.P."/>
            <person name="Blakey S.E."/>
            <person name="Bridgeman A.M."/>
            <person name="Brown A.J."/>
            <person name="Buck D."/>
            <person name="Burrill W.D."/>
            <person name="Butler A.P."/>
            <person name="Carder C."/>
            <person name="Carter N.P."/>
            <person name="Chapman J.C."/>
            <person name="Clamp M."/>
            <person name="Clark G."/>
            <person name="Clark L.N."/>
            <person name="Clark S.Y."/>
            <person name="Clee C.M."/>
            <person name="Clegg S."/>
            <person name="Cobley V.E."/>
            <person name="Collier R.E."/>
            <person name="Connor R.E."/>
            <person name="Corby N.R."/>
            <person name="Coulson A."/>
            <person name="Coville G.J."/>
            <person name="Deadman R."/>
            <person name="Dhami P.D."/>
            <person name="Dunn M."/>
            <person name="Ellington A.G."/>
            <person name="Frankland J.A."/>
            <person name="Fraser A."/>
            <person name="French L."/>
            <person name="Garner P."/>
            <person name="Grafham D.V."/>
            <person name="Griffiths C."/>
            <person name="Griffiths M.N.D."/>
            <person name="Gwilliam R."/>
            <person name="Hall R.E."/>
            <person name="Hammond S."/>
            <person name="Harley J.L."/>
            <person name="Heath P.D."/>
            <person name="Ho S."/>
            <person name="Holden J.L."/>
            <person name="Howden P.J."/>
            <person name="Huckle E."/>
            <person name="Hunt A.R."/>
            <person name="Hunt S.E."/>
            <person name="Jekosch K."/>
            <person name="Johnson C.M."/>
            <person name="Johnson D."/>
            <person name="Kay M.P."/>
            <person name="Kimberley A.M."/>
            <person name="King A."/>
            <person name="Knights A."/>
            <person name="Laird G.K."/>
            <person name="Lawlor S."/>
            <person name="Lehvaeslaiho M.H."/>
            <person name="Leversha M.A."/>
            <person name="Lloyd C."/>
            <person name="Lloyd D.M."/>
            <person name="Lovell J.D."/>
            <person name="Marsh V.L."/>
            <person name="Martin S.L."/>
            <person name="McConnachie L.J."/>
            <person name="McLay K."/>
            <person name="McMurray A.A."/>
            <person name="Milne S.A."/>
            <person name="Mistry D."/>
            <person name="Moore M.J.F."/>
            <person name="Mullikin J.C."/>
            <person name="Nickerson T."/>
            <person name="Oliver K."/>
            <person name="Parker A."/>
            <person name="Patel R."/>
            <person name="Pearce T.A.V."/>
            <person name="Peck A.I."/>
            <person name="Phillimore B.J.C.T."/>
            <person name="Prathalingam S.R."/>
            <person name="Plumb R.W."/>
            <person name="Ramsay H."/>
            <person name="Rice C.M."/>
            <person name="Ross M.T."/>
            <person name="Scott C.E."/>
            <person name="Sehra H.K."/>
            <person name="Shownkeen R."/>
            <person name="Sims S."/>
            <person name="Skuce C.D."/>
            <person name="Smith M.L."/>
            <person name="Soderlund C."/>
            <person name="Steward C.A."/>
            <person name="Sulston J.E."/>
            <person name="Swann R.M."/>
            <person name="Sycamore N."/>
            <person name="Taylor R."/>
            <person name="Tee L."/>
            <person name="Thomas D.W."/>
            <person name="Thorpe A."/>
            <person name="Tracey A."/>
            <person name="Tromans A.C."/>
            <person name="Vaudin M."/>
            <person name="Wall M."/>
            <person name="Wallis J.M."/>
            <person name="Whitehead S.L."/>
            <person name="Whittaker P."/>
            <person name="Willey D.L."/>
            <person name="Williams L."/>
            <person name="Williams S.A."/>
            <person name="Wilming L."/>
            <person name="Wray P.W."/>
            <person name="Hubbard T."/>
            <person name="Durbin R.M."/>
            <person name="Bentley D.R."/>
            <person name="Beck S."/>
            <person name="Rogers J."/>
        </authorList>
    </citation>
    <scope>NUCLEOTIDE SEQUENCE [LARGE SCALE GENOMIC DNA]</scope>
</reference>
<reference key="7">
    <citation type="journal article" date="2004" name="Genome Res.">
        <title>The status, quality, and expansion of the NIH full-length cDNA project: the Mammalian Gene Collection (MGC).</title>
        <authorList>
            <consortium name="The MGC Project Team"/>
        </authorList>
    </citation>
    <scope>NUCLEOTIDE SEQUENCE [LARGE SCALE MRNA]</scope>
    <scope>VARIANTS ARG-279 AND PRO-574</scope>
    <source>
        <tissue>B-cell</tissue>
    </source>
</reference>
<reference key="8">
    <citation type="journal article" date="1993" name="Oncogene">
        <title>Regulatory mechanism of 92 kDa type IV collagenase gene expression which is associated with invasiveness of tumor cells.</title>
        <authorList>
            <person name="Sato H."/>
            <person name="Seiki M."/>
        </authorList>
    </citation>
    <scope>NUCLEOTIDE SEQUENCE [GENOMIC DNA] OF 1-11</scope>
</reference>
<reference key="9">
    <citation type="journal article" date="1992" name="Eur. J. Haematol.">
        <title>Human neutrophil gelatinase: a marker for circulating blood neutrophils. Purification and quantitation by enzyme linked immunosorbent assay.</title>
        <authorList>
            <person name="Kjeldsen L."/>
            <person name="Bjerrum O.W."/>
            <person name="Hovgaard D."/>
            <person name="Johnsen A.H."/>
            <person name="Sehested M."/>
            <person name="Borregaard N."/>
        </authorList>
    </citation>
    <scope>PROTEIN SEQUENCE OF 20-39</scope>
    <scope>GLYCOSYLATION</scope>
    <source>
        <tissue>Neutrophil</tissue>
    </source>
</reference>
<reference key="10">
    <citation type="journal article" date="1991" name="Cytokine">
        <title>The cytokine-protease connection: identification of a 96-kD THP-1 gelatinase and regulation by interleukin-1 and cytokine inducers.</title>
        <authorList>
            <person name="van Ranst M."/>
            <person name="Norga K."/>
            <person name="Masure S."/>
            <person name="Proost P."/>
            <person name="Vandekerckhove F."/>
            <person name="Auwerx J."/>
            <person name="van Damme J."/>
            <person name="Opdenakker G."/>
        </authorList>
    </citation>
    <scope>PROTEIN SEQUENCE OF 20-37</scope>
</reference>
<reference key="11">
    <citation type="journal article" date="1992" name="J. Biol. Chem.">
        <title>Matrix metalloproteinase 3 (stromelysin) activates the precursor for the human matrix metalloproteinase 9.</title>
        <authorList>
            <person name="Ogata Y."/>
            <person name="Enghild J.J."/>
            <person name="Nagase H."/>
        </authorList>
    </citation>
    <scope>PROTEIN SEQUENCE OF 20-34; 60-71 AND 107-118</scope>
    <scope>INDUCTION</scope>
    <scope>PROTEOLYTIC PROCESSING BY MMP3</scope>
</reference>
<reference key="12">
    <citation type="journal article" date="1992" name="J. Biol. Chem.">
        <title>Matrix metalloproteinase 9 (92-kDa gelatinase/type IV collagenase) from HT 1080 human fibrosarcoma cells. Purification and activation of the precursor and enzymic properties.</title>
        <authorList>
            <person name="Okada Y."/>
            <person name="Gonoji Y."/>
            <person name="Naka K."/>
            <person name="Tomita K."/>
            <person name="Nakanishi I."/>
            <person name="Iwata K."/>
            <person name="Yamashita K."/>
            <person name="Hayakawa T."/>
        </authorList>
    </citation>
    <scope>PROTEIN SEQUENCE OF 20-32 AND 94-111</scope>
    <scope>PROTEOLYTIC PROCESSING</scope>
    <scope>INDUCTION</scope>
    <source>
        <tissue>Fibrosarcoma</tissue>
    </source>
</reference>
<reference key="13">
    <citation type="journal article" date="1995" name="Biochim. Biophys. Acta">
        <title>Proteolytic and non-proteolytic activation of human neutrophil progelatinase B.</title>
        <authorList>
            <person name="Sang Q.X."/>
            <person name="Birkedal-Hansen H."/>
            <person name="Van Wart H.E."/>
        </authorList>
    </citation>
    <scope>PROTEIN SEQUENCE OF 20-27; 60-67; 94-101 AND 107-113</scope>
</reference>
<reference key="14">
    <citation type="journal article" date="1991" name="Eur. J. Biochem.">
        <title>Purification and identification of 91-kDa neutrophil gelatinase. Release by the activating peptide interleukin-8.</title>
        <authorList>
            <person name="Masure S."/>
            <person name="Proost P."/>
            <person name="van Damme J."/>
            <person name="Opdenakker G."/>
        </authorList>
    </citation>
    <scope>PROTEIN SEQUENCE OF 28-60</scope>
    <source>
        <tissue>Neutrophil</tissue>
    </source>
</reference>
<reference key="15">
    <citation type="journal article" date="1991" name="Lymphokine Cytokine Res.">
        <title>Cytokine-mediated regulation of human leukocyte gelatinases and role in arthritis.</title>
        <authorList>
            <person name="Opdenakker G."/>
            <person name="Masure S."/>
            <person name="Grillet B."/>
            <person name="Van Damme J."/>
        </authorList>
    </citation>
    <scope>PROTEIN SEQUENCE OF 28-37</scope>
</reference>
<reference key="16">
    <citation type="journal article" date="1992" name="Matrix Suppl.">
        <title>Latent collagenase and gelatinase from human neutrophils and their activation.</title>
        <authorList>
            <person name="Tschesche H."/>
            <person name="Knaeuper V."/>
            <person name="Kraemer S."/>
            <person name="Michaelis J."/>
            <person name="Oberhoff R."/>
            <person name="Reinke H."/>
        </authorList>
    </citation>
    <scope>PROTEIN SEQUENCE OF 93-115</scope>
    <scope>FUNCTION</scope>
    <scope>CATALYTIC ACTIVITY</scope>
    <source>
        <tissue>Blood</tissue>
    </source>
</reference>
<reference key="17">
    <citation type="journal article" date="1992" name="FEBS Lett.">
        <title>A 25 kDa alpha 2-microglobulin-related protein is a component of the 125 kDa form of human gelatinase.</title>
        <authorList>
            <person name="Triebel S."/>
            <person name="Blaeser J."/>
            <person name="Reinke H."/>
            <person name="Tschesche H."/>
        </authorList>
    </citation>
    <scope>PARTIAL PROTEIN SEQUENCE</scope>
    <scope>INTERACTION WITH LCN2</scope>
    <scope>SUBUNIT</scope>
</reference>
<reference key="18">
    <citation type="journal article" date="1993" name="J. Biol. Chem.">
        <title>Isolation and primary structure of NGAL, a novel protein associated with human neutrophil gelatinase.</title>
        <authorList>
            <person name="Kjeldsen L."/>
            <person name="Johnsen A.H."/>
            <person name="Sengelov H."/>
            <person name="Borregaard N."/>
        </authorList>
    </citation>
    <scope>INTERACTION WITH LCN2</scope>
    <scope>TISSUE SPECIFICITY</scope>
    <scope>SUBUNIT</scope>
</reference>
<reference key="19">
    <citation type="journal article" date="1996" name="Exp. Mol. Med.">
        <title>Purification and characterization of human 92-kDa type IV collagenase (gelatinase B).</title>
        <authorList>
            <person name="Kang K."/>
            <person name="Lee D.-H."/>
        </authorList>
    </citation>
    <scope>CHARACTERIZATION</scope>
</reference>
<reference key="20">
    <citation type="journal article" date="2000" name="J. Biol. Chem.">
        <title>Characterization of the monomeric and dimeric forms of latent and active matrix metalloproteinase-9. Differential rates for activation by stromelysin 1.</title>
        <authorList>
            <person name="Olson M.W."/>
            <person name="Bernardo M.M."/>
            <person name="Pietila M."/>
            <person name="Gervasi D.C."/>
            <person name="Toth M."/>
            <person name="Kotra L.P."/>
            <person name="Massova I."/>
            <person name="Mobashery S."/>
            <person name="Fridman R."/>
        </authorList>
    </citation>
    <scope>SUBUNIT</scope>
</reference>
<reference key="21">
    <citation type="journal article" date="2001" name="Infect. Immun.">
        <title>Salivary histatin 5 is an inhibitor of both host and bacterial enzymes implicated in periodontal disease.</title>
        <authorList>
            <person name="Gusman H."/>
            <person name="Travis J."/>
            <person name="Helmerhorst E.J."/>
            <person name="Potempa J."/>
            <person name="Troxler R.F."/>
            <person name="Oppenheim F.G."/>
        </authorList>
    </citation>
    <scope>ACTIVITY REGULATION</scope>
</reference>
<reference key="22">
    <citation type="journal article" date="2003" name="Oncogene">
        <title>Cleavage of metastasis suppressor gene product KiSS-1 protein/metastin by matrix metalloproteinases.</title>
        <authorList>
            <person name="Takino T."/>
            <person name="Koshikawa N."/>
            <person name="Miyamori H."/>
            <person name="Tanaka M."/>
            <person name="Sasaki T."/>
            <person name="Okada Y."/>
            <person name="Seiki M."/>
            <person name="Sato H."/>
        </authorList>
    </citation>
    <scope>FUNCTION</scope>
    <scope>PROTEOLYTIC PROCESSING OF KISS1</scope>
</reference>
<reference key="23">
    <citation type="journal article" date="2006" name="Exp. Dermatol.">
        <title>Extracellular matrix protein 1 inhibits the activity of matrix metalloproteinase 9 through high-affinity protein/protein interactions.</title>
        <authorList>
            <person name="Fujimoto N."/>
            <person name="Terlizzi J."/>
            <person name="Aho S."/>
            <person name="Brittingham R."/>
            <person name="Fertala A."/>
            <person name="Oyama N."/>
            <person name="McGrath J.A."/>
            <person name="Uitto J."/>
        </authorList>
    </citation>
    <scope>INTERACTION WITH ECM1</scope>
    <scope>ACTIVITY REGULATION</scope>
</reference>
<reference key="24">
    <citation type="journal article" date="2008" name="Am. J. Hum. Genet.">
        <title>A functional polymorphism in THBS2 that affects alternative splicing and MMP binding is associated with lumbar-disc herniation.</title>
        <authorList>
            <person name="Hirose Y."/>
            <person name="Chiba K."/>
            <person name="Karasugi T."/>
            <person name="Nakajima M."/>
            <person name="Kawaguchi Y."/>
            <person name="Mikami Y."/>
            <person name="Furuichi T."/>
            <person name="Mio F."/>
            <person name="Miyake A."/>
            <person name="Miyamoto T."/>
            <person name="Ozaki K."/>
            <person name="Takahashi A."/>
            <person name="Mizuta H."/>
            <person name="Kubo T."/>
            <person name="Kimura T."/>
            <person name="Tanaka T."/>
            <person name="Toyama Y."/>
            <person name="Ikegawa S."/>
        </authorList>
    </citation>
    <scope>INVOLVEMENT IN SUSCEPTIBILITY TO IDD</scope>
</reference>
<reference key="25">
    <citation type="journal article" date="2009" name="Am. J. Hum. Genet.">
        <title>Mutations in MMP9 and MMP13 determine the mode of inheritance and the clinical spectrum of metaphyseal anadysplasia.</title>
        <authorList>
            <person name="Lausch E."/>
            <person name="Keppler R."/>
            <person name="Hilbert K."/>
            <person name="Cormier-Daire V."/>
            <person name="Nikkel S."/>
            <person name="Nishimura G."/>
            <person name="Unger S."/>
            <person name="Spranger J."/>
            <person name="Superti-Furga A."/>
            <person name="Zabel B."/>
        </authorList>
    </citation>
    <scope>INVOLVEMENT IN MANDP2</scope>
</reference>
<reference key="26">
    <citation type="journal article" date="2009" name="EMBO Rep.">
        <title>The adenomatous polyposis coli-associated exchange factors Asef and Asef2 are required for adenoma formation in Apc(Min/+)mice.</title>
        <authorList>
            <person name="Kawasaki Y."/>
            <person name="Tsuji S."/>
            <person name="Muroya K."/>
            <person name="Furukawa S."/>
            <person name="Shibata Y."/>
            <person name="Okuno M."/>
            <person name="Ohwada S."/>
            <person name="Akiyama T."/>
        </authorList>
    </citation>
    <scope>INDUCTION</scope>
</reference>
<reference key="27">
    <citation type="journal article" date="2010" name="Biochem. Biophys. Res. Commun.">
        <title>Non-acylated Mycobacterium bovis glycoprotein MPB83 binds to TLR1/2 and stimulates production of matrix metalloproteinase 9.</title>
        <authorList>
            <person name="Chambers M.A."/>
            <person name="Whelan A.O."/>
            <person name="Spallek R."/>
            <person name="Singh M."/>
            <person name="Coddeville B."/>
            <person name="Guerardel Y."/>
            <person name="Elass E."/>
        </authorList>
    </citation>
    <scope>INDUCTION BY M.BOVIS MPB83</scope>
    <source>
        <tissue>Monocytic leukemia</tissue>
    </source>
</reference>
<reference key="28">
    <citation type="journal article" date="2010" name="Infect. Immun.">
        <title>Staphylococcal superantigen-like protein 5 inhibits matrix metalloproteinase 9 from human neutrophils.</title>
        <authorList>
            <person name="Itoh S."/>
            <person name="Hamada E."/>
            <person name="Kamoshida G."/>
            <person name="Takeshita K."/>
            <person name="Oku T."/>
            <person name="Tsuji T."/>
        </authorList>
    </citation>
    <scope>INTERACTION WITH STAPHYLOCOCCUS AUREUS PROTEIN SSL5 (MICROBIAL INFECTION)</scope>
</reference>
<reference key="29">
    <citation type="journal article" date="2018" name="Microbiol. Immunol.">
        <title>Role of sialic acid-containing glycans of matrix metalloproteinase-9 (MMP-9) in the interaction between MMP-9 and staphylococcal superantigen-like protein 5.</title>
        <authorList>
            <person name="Kurisaka C."/>
            <person name="Oku T."/>
            <person name="Itoh S."/>
            <person name="Tsuji T."/>
        </authorList>
    </citation>
    <scope>INTERACTION WITH STAPHYLOCOCCUS AUREUS PROTEIN SSL5 (MICROBIAL INFECTION)</scope>
</reference>
<reference key="30">
    <citation type="journal article" date="2020" name="Circulation">
        <title>Anti-inflammatory actions of soluble ninjurin-1 ameliorate atherosclerosis.</title>
        <authorList>
            <person name="Jeon S."/>
            <person name="Kim T.K."/>
            <person name="Jeong S.J."/>
            <person name="Jung I.H."/>
            <person name="Kim N."/>
            <person name="Lee M.N."/>
            <person name="Sonn S.K."/>
            <person name="Seo S."/>
            <person name="Jin J."/>
            <person name="Kweon H.Y."/>
            <person name="Kim S."/>
            <person name="Shim D."/>
            <person name="Park Y.M."/>
            <person name="Lee S.H."/>
            <person name="Kim K.W."/>
            <person name="Cybulsky M.I."/>
            <person name="Shim H."/>
            <person name="Roh T.Y."/>
            <person name="Park W.Y."/>
            <person name="Lee H.O."/>
            <person name="Choi J.H."/>
            <person name="Park S.H."/>
            <person name="Oh G.T."/>
        </authorList>
    </citation>
    <scope>FUNCTION</scope>
</reference>
<reference key="31">
    <citation type="journal article" date="2002" name="Acta Crystallogr. D">
        <title>Structure of the C-terminally truncated human ProMMP9, a gelatin-binding matrix metalloproteinase.</title>
        <authorList>
            <person name="Elkins P.A."/>
            <person name="Ho Y.S."/>
            <person name="Smith W.W."/>
            <person name="Janson C.A."/>
            <person name="D'Alessio K.J."/>
            <person name="McQueney M.S."/>
            <person name="Cummings M.D."/>
            <person name="Romanic A.M."/>
        </authorList>
    </citation>
    <scope>X-RAY CRYSTALLOGRAPHY (2.5 ANGSTROMS) OF 20-444 IN COMPLEX WITH ZINC AND MAGNESIUM IONS</scope>
    <scope>COFACTOR</scope>
    <scope>DOMAIN</scope>
</reference>
<reference key="32">
    <citation type="journal article" date="2002" name="J. Mol. Biol.">
        <title>Crystal structure of human MMP9 in complex with a reverse hydroxamate inhibitor.</title>
        <authorList>
            <person name="Rowsell S."/>
            <person name="Hawtin P."/>
            <person name="Minshull C.A."/>
            <person name="Jepson H."/>
            <person name="Brockbank S.M.V."/>
            <person name="Barratt D.G."/>
            <person name="Slater A.M."/>
            <person name="McPheat W.L."/>
            <person name="Waterson D."/>
            <person name="Henney A.M."/>
            <person name="Pauptit R.A."/>
        </authorList>
    </citation>
    <scope>X-RAY CRYSTALLOGRAPHY (2.1 ANGSTROMS) OF 107-215 IN COMPLEX WITH INHIBITOR; ZINC AND CALCIUM IONS</scope>
    <scope>COFACTOR</scope>
    <scope>ACTIVE SITE</scope>
    <scope>MUTAGENESIS OF GLU-402</scope>
</reference>
<reference key="33">
    <citation type="journal article" date="2002" name="J. Mol. Biol.">
        <title>Structural basis of the adaptive molecular recognition by MMP9.</title>
        <authorList>
            <person name="Cha H."/>
            <person name="Kopetzki E."/>
            <person name="Huber R."/>
            <person name="Lanzendoerfer M."/>
            <person name="Brandstetter H."/>
        </authorList>
    </citation>
    <scope>X-RAY CRYSTALLOGRAPHY (1.95 ANGSTROMS) OF 513-707</scope>
    <scope>SUBUNIT</scope>
    <scope>DISULFIDE BOND</scope>
</reference>
<reference key="34">
    <citation type="journal article" date="1999" name="Hum. Genet.">
        <title>Genetic variation at the matrix metalloproteinase-9 locus on chromosome 20q12.2-13.1.</title>
        <authorList>
            <person name="Zhang B."/>
            <person name="Henney A."/>
            <person name="Eriksson P."/>
            <person name="Hamsten A."/>
            <person name="Watkins H."/>
            <person name="Ye S."/>
        </authorList>
    </citation>
    <scope>VARIANTS VAL-20; LYS-82 AND ARG-279</scope>
</reference>
<proteinExistence type="evidence at protein level"/>
<comment type="function">
    <text evidence="1 12 17 26 28">Matrix metalloproteinase that plays an essential role in local proteolysis of the extracellular matrix and in leukocyte migration (PubMed:12879005, PubMed:1480034, PubMed:2551898). Could play a role in bone osteoclastic resorption (By similarity). Cleaves KiSS1 at a Gly-|-Leu bond (PubMed:12879005). Cleaves NINJ1 to generate the Secreted ninjurin-1 form (PubMed:32883094). Cleaves type IV and type V collagen into large C-terminal three quarter fragments and shorter N-terminal one quarter fragments (PubMed:1480034). Degrades fibronectin but not laminin or Pz-peptide.</text>
</comment>
<comment type="catalytic activity">
    <reaction evidence="17">
        <text>Cleavage of gelatin types I and V and collagen types IV and V.</text>
        <dbReference type="EC" id="3.4.24.35"/>
    </reaction>
</comment>
<comment type="cofactor">
    <cofactor evidence="8">
        <name>Zn(2+)</name>
        <dbReference type="ChEBI" id="CHEBI:29105"/>
    </cofactor>
    <text evidence="8">Binds 2 Zn(2+) ions per subunit.</text>
</comment>
<comment type="cofactor">
    <cofactor evidence="8">
        <name>Ca(2+)</name>
        <dbReference type="ChEBI" id="CHEBI:29108"/>
    </cofactor>
    <text>Binds 3 Ca(2+) ions per subunit.</text>
</comment>
<comment type="activity regulation">
    <text evidence="7 19">Inhibited by histatin-3 1/24 (histatin-5). Inhibited by ECM1.</text>
</comment>
<comment type="subunit">
    <text evidence="6 8 9 10 11 19 30">Exists as monomer or homodimer; disulfide-linked (PubMed:1281792, PubMed:7683678). Also exists as heterodimer with LCN2 (PubMed:1281792, PubMed:7683678). Macrophages and transformed cell lines produce only the monomeric form. Interacts with ECM1 (PubMed:16512877).</text>
</comment>
<comment type="subunit">
    <text evidence="24 27">(Microbial infection) Interacts with Staphylococcus aureus protein SSL5; this interaction inhibits MMP9 activity.</text>
</comment>
<comment type="interaction">
    <interactant intactId="EBI-1382326">
        <id>P14780</id>
    </interactant>
    <interactant intactId="EBI-8153734">
        <id>Q16819</id>
        <label>MEP1A</label>
    </interactant>
    <organismsDiffer>false</organismsDiffer>
    <experiments>2</experiments>
</comment>
<comment type="interaction">
    <interactant intactId="EBI-1382326">
        <id>P14780</id>
    </interactant>
    <interactant intactId="EBI-968418">
        <id>Q16820</id>
        <label>MEP1B</label>
    </interactant>
    <organismsDiffer>false</organismsDiffer>
    <experiments>2</experiments>
</comment>
<comment type="interaction">
    <interactant intactId="EBI-1382326">
        <id>P14780</id>
    </interactant>
    <interactant intactId="EBI-1382326">
        <id>P14780</id>
        <label>MMP9</label>
    </interactant>
    <organismsDiffer>false</organismsDiffer>
    <experiments>4</experiments>
</comment>
<comment type="interaction">
    <interactant intactId="EBI-1382326">
        <id>P14780</id>
    </interactant>
    <interactant intactId="EBI-4479975">
        <id>Q8IX30</id>
        <label>SCUBE3</label>
    </interactant>
    <organismsDiffer>false</organismsDiffer>
    <experiments>2</experiments>
</comment>
<comment type="interaction">
    <interactant intactId="EBI-1382326">
        <id>P14780</id>
    </interactant>
    <interactant intactId="EBI-8515977">
        <id>P13611</id>
        <label>VCAN</label>
    </interactant>
    <organismsDiffer>false</organismsDiffer>
    <experiments>3</experiments>
</comment>
<comment type="interaction">
    <interactant intactId="EBI-1382326">
        <id>P14780</id>
    </interactant>
    <interactant intactId="EBI-26361542">
        <id>Q9ZFS6</id>
        <label>set3</label>
    </interactant>
    <organismsDiffer>true</organismsDiffer>
    <experiments>2</experiments>
</comment>
<comment type="subcellular location">
    <subcellularLocation>
        <location evidence="26">Secreted</location>
        <location evidence="26">Extracellular space</location>
        <location evidence="26">Extracellular matrix</location>
    </subcellularLocation>
</comment>
<comment type="tissue specificity">
    <text evidence="30">Detected in neutrophils (at protein level) (PubMed:7683678). Produced by normal alveolar macrophages and granulocytes.</text>
</comment>
<comment type="induction">
    <text evidence="13 14 23">Activated by 4-aminophenylmercuric acetate and phorbol ester. Up-regulated by ARHGEF4, SPATA13 and APC via the JNK signaling pathway in colorectal tumor cells.</text>
</comment>
<comment type="induction">
    <text evidence="25">(Microbial infection) Expression induced by M.bovis MPB83 (at protein level) (PubMed:20800577).</text>
</comment>
<comment type="domain">
    <text evidence="9">The conserved cysteine present in the cysteine-switch motif binds the catalytic zinc ion, thus inhibiting the enzyme. The dissociation of the cysteine from the zinc ion upon the activation-peptide release activates the enzyme.</text>
</comment>
<comment type="PTM">
    <text evidence="13 14">Processing of the precursor yields different active forms of 64, 67 and 82 kDa. Sequentially processing by MMP3 yields the 82 kDa matrix metalloproteinase-9.</text>
</comment>
<comment type="PTM">
    <text evidence="15">N- and O-glycosylated.</text>
</comment>
<comment type="disease" evidence="21">
    <disease id="DI-01829">
        <name>Intervertebral disc disease</name>
        <acronym>IDD</acronym>
        <description>A common musculo-skeletal disorder caused by degeneration of intervertebral disks of the lumbar spine. It results in low-back pain and unilateral leg pain.</description>
        <dbReference type="MIM" id="603932"/>
    </disease>
    <text>Disease susceptibility is associated with variants affecting the gene represented in this entry.</text>
</comment>
<comment type="disease" evidence="22">
    <disease id="DI-02636">
        <name>Metaphyseal anadysplasia 2</name>
        <acronym>MANDP2</acronym>
        <description>A bone development disorder characterized by skeletal anomalies that resolve spontaneously with age. Clinical characteristics are evident from the first months of life and include slight shortness of stature and a mild varus deformity of the legs. Patients attain a normal stature in adolescence and show improvement or complete resolution of varus deformity of the legs and rhizomelic micromelia.</description>
        <dbReference type="MIM" id="613073"/>
    </disease>
    <text>The disease is caused by variants affecting the gene represented in this entry.</text>
</comment>
<comment type="miscellaneous">
    <text>In the arthritis patient this enzyme might contribute to the pathogenesis of joint destruction and might constitute a useful marker of disease status.</text>
</comment>
<comment type="similarity">
    <text evidence="36">Belongs to the peptidase M10A family.</text>
</comment>
<comment type="online information" name="Atlas of Genetics and Cytogenetics in Oncology and Haematology">
    <link uri="https://atlasgeneticsoncology.org/gene/41408/MMP9"/>
</comment>
<sequence length="707" mass="78458">MSLWQPLVLVLLVLGCCFAAPRQRQSTLVLFPGDLRTNLTDRQLAEEYLYRYGYTRVAEMRGESKSLGPALLLLQKQLSLPETGELDSATLKAMRTPRCGVPDLGRFQTFEGDLKWHHHNITYWIQNYSEDLPRAVIDDAFARAFALWSAVTPLTFTRVYSRDADIVIQFGVAEHGDGYPFDGKDGLLAHAFPPGPGIQGDAHFDDDELWSLGKGVVVPTRFGNADGAACHFPFIFEGRSYSACTTDGRSDGLPWCSTTANYDTDDRFGFCPSERLYTQDGNADGKPCQFPFIFQGQSYSACTTDGRSDGYRWCATTANYDRDKLFGFCPTRADSTVMGGNSAGELCVFPFTFLGKEYSTCTSEGRGDGRLWCATTSNFDSDKKWGFCPDQGYSLFLVAAHEFGHALGLDHSSVPEALMYPMYRFTEGPPLHKDDVNGIRHLYGPRPEPEPRPPTTTTPQPTAPPTVCPTGPPTVHPSERPTAGPTGPPSAGPTGPPTAGPSTATTVPLSPVDDACNVNIFDAIAEIGNQLYLFKDGKYWRFSEGRGSRPQGPFLIADKWPALPRKLDSVFEERLSKKLFFFSGRQVWVYTGASVLGPRRLDKLGLGADVAQVTGALRSGRGKMLLFSGRRLWRFDVKAQMVDPRSASEVDRMFPGVPLDTHDVFQYREKAYFCQDRFYWRVSSRSELNQVDQVGYVTYDILQCPED</sequence>
<name>MMP9_HUMAN</name>
<feature type="signal peptide" evidence="13 14 15 20 26 29">
    <location>
        <begin position="1"/>
        <end position="19"/>
    </location>
</feature>
<feature type="propeptide" id="PRO_0000028754" description="Activation peptide" evidence="14">
    <location>
        <begin position="20"/>
        <end position="93"/>
    </location>
</feature>
<feature type="chain" id="PRO_0000028755" description="67 kDa matrix metalloproteinase-9" evidence="37">
    <location>
        <begin position="94"/>
        <end status="unknown"/>
    </location>
</feature>
<feature type="chain" id="PRO_0000028756" description="82 kDa matrix metalloproteinase-9" evidence="37">
    <location>
        <begin position="107"/>
        <end position="707"/>
    </location>
</feature>
<feature type="propeptide" id="PRO_0000028757" description="Removed in 64 kDa matrix metalloproteinase-9 and 67 kDa matrix metalloproteinase-9">
    <location>
        <begin status="unknown"/>
        <end position="707"/>
    </location>
</feature>
<feature type="domain" description="Fibronectin type-II 1" evidence="3">
    <location>
        <begin position="225"/>
        <end position="273"/>
    </location>
</feature>
<feature type="domain" description="Fibronectin type-II 2" evidence="3">
    <location>
        <begin position="283"/>
        <end position="331"/>
    </location>
</feature>
<feature type="domain" description="Fibronectin type-II 3" evidence="3">
    <location>
        <begin position="342"/>
        <end position="390"/>
    </location>
</feature>
<feature type="repeat" description="Hemopexin 1">
    <location>
        <begin position="518"/>
        <end position="563"/>
    </location>
</feature>
<feature type="repeat" description="Hemopexin 2">
    <location>
        <begin position="564"/>
        <end position="608"/>
    </location>
</feature>
<feature type="repeat" description="Hemopexin 3">
    <location>
        <begin position="610"/>
        <end position="657"/>
    </location>
</feature>
<feature type="repeat" description="Hemopexin 4">
    <location>
        <begin position="658"/>
        <end position="704"/>
    </location>
</feature>
<feature type="region of interest" description="Disordered" evidence="4">
    <location>
        <begin position="431"/>
        <end position="508"/>
    </location>
</feature>
<feature type="short sequence motif" description="Cysteine switch" evidence="33">
    <location>
        <begin position="97"/>
        <end position="104"/>
    </location>
</feature>
<feature type="compositionally biased region" description="Pro residues" evidence="4">
    <location>
        <begin position="452"/>
        <end position="475"/>
    </location>
</feature>
<feature type="compositionally biased region" description="Pro residues" evidence="4">
    <location>
        <begin position="486"/>
        <end position="499"/>
    </location>
</feature>
<feature type="active site" evidence="8">
    <location>
        <position position="402"/>
    </location>
</feature>
<feature type="binding site" description="in inhibited form" evidence="8 9">
    <location>
        <position position="99"/>
    </location>
    <ligand>
        <name>Zn(2+)</name>
        <dbReference type="ChEBI" id="CHEBI:29105"/>
        <label>2</label>
        <note>catalytic</note>
    </ligand>
</feature>
<feature type="binding site" evidence="8">
    <location>
        <position position="131"/>
    </location>
    <ligand>
        <name>Ca(2+)</name>
        <dbReference type="ChEBI" id="CHEBI:29108"/>
        <label>1</label>
    </ligand>
</feature>
<feature type="binding site" evidence="8">
    <location>
        <position position="165"/>
    </location>
    <ligand>
        <name>Ca(2+)</name>
        <dbReference type="ChEBI" id="CHEBI:29108"/>
        <label>2</label>
    </ligand>
</feature>
<feature type="binding site" evidence="8 9">
    <location>
        <position position="175"/>
    </location>
    <ligand>
        <name>Zn(2+)</name>
        <dbReference type="ChEBI" id="CHEBI:29105"/>
        <label>1</label>
        <note>structural</note>
    </ligand>
</feature>
<feature type="binding site" evidence="8 9">
    <location>
        <position position="177"/>
    </location>
    <ligand>
        <name>Zn(2+)</name>
        <dbReference type="ChEBI" id="CHEBI:29105"/>
        <label>1</label>
        <note>structural</note>
    </ligand>
</feature>
<feature type="binding site" evidence="8">
    <location>
        <position position="182"/>
    </location>
    <ligand>
        <name>Ca(2+)</name>
        <dbReference type="ChEBI" id="CHEBI:29108"/>
        <label>3</label>
    </ligand>
</feature>
<feature type="binding site" evidence="8">
    <location>
        <position position="183"/>
    </location>
    <ligand>
        <name>Ca(2+)</name>
        <dbReference type="ChEBI" id="CHEBI:29108"/>
        <label>3</label>
    </ligand>
</feature>
<feature type="binding site" evidence="8">
    <location>
        <position position="185"/>
    </location>
    <ligand>
        <name>Ca(2+)</name>
        <dbReference type="ChEBI" id="CHEBI:29108"/>
        <label>3</label>
    </ligand>
</feature>
<feature type="binding site" evidence="8">
    <location>
        <position position="187"/>
    </location>
    <ligand>
        <name>Ca(2+)</name>
        <dbReference type="ChEBI" id="CHEBI:29108"/>
        <label>3</label>
    </ligand>
</feature>
<feature type="binding site" evidence="8 9">
    <location>
        <position position="190"/>
    </location>
    <ligand>
        <name>Zn(2+)</name>
        <dbReference type="ChEBI" id="CHEBI:29105"/>
        <label>1</label>
        <note>structural</note>
    </ligand>
</feature>
<feature type="binding site" evidence="8">
    <location>
        <position position="197"/>
    </location>
    <ligand>
        <name>Ca(2+)</name>
        <dbReference type="ChEBI" id="CHEBI:29108"/>
        <label>2</label>
    </ligand>
</feature>
<feature type="binding site" evidence="8">
    <location>
        <position position="199"/>
    </location>
    <ligand>
        <name>Ca(2+)</name>
        <dbReference type="ChEBI" id="CHEBI:29108"/>
        <label>2</label>
    </ligand>
</feature>
<feature type="binding site" evidence="8">
    <location>
        <position position="201"/>
    </location>
    <ligand>
        <name>Ca(2+)</name>
        <dbReference type="ChEBI" id="CHEBI:29108"/>
        <label>2</label>
    </ligand>
</feature>
<feature type="binding site" evidence="8 9">
    <location>
        <position position="203"/>
    </location>
    <ligand>
        <name>Zn(2+)</name>
        <dbReference type="ChEBI" id="CHEBI:29105"/>
        <label>1</label>
        <note>structural</note>
    </ligand>
</feature>
<feature type="binding site" evidence="8">
    <location>
        <position position="205"/>
    </location>
    <ligand>
        <name>Ca(2+)</name>
        <dbReference type="ChEBI" id="CHEBI:29108"/>
        <label>3</label>
    </ligand>
</feature>
<feature type="binding site" evidence="8">
    <location>
        <position position="206"/>
    </location>
    <ligand>
        <name>Ca(2+)</name>
        <dbReference type="ChEBI" id="CHEBI:29108"/>
        <label>1</label>
    </ligand>
</feature>
<feature type="binding site" evidence="8">
    <location>
        <position position="208"/>
    </location>
    <ligand>
        <name>Ca(2+)</name>
        <dbReference type="ChEBI" id="CHEBI:29108"/>
        <label>1</label>
    </ligand>
</feature>
<feature type="binding site" evidence="8">
    <location>
        <position position="208"/>
    </location>
    <ligand>
        <name>Ca(2+)</name>
        <dbReference type="ChEBI" id="CHEBI:29108"/>
        <label>3</label>
    </ligand>
</feature>
<feature type="binding site" evidence="8 9">
    <location>
        <position position="401"/>
    </location>
    <ligand>
        <name>Zn(2+)</name>
        <dbReference type="ChEBI" id="CHEBI:29105"/>
        <label>2</label>
        <note>catalytic</note>
    </ligand>
</feature>
<feature type="binding site" evidence="8 9">
    <location>
        <position position="405"/>
    </location>
    <ligand>
        <name>Zn(2+)</name>
        <dbReference type="ChEBI" id="CHEBI:29105"/>
        <label>2</label>
        <note>catalytic</note>
    </ligand>
</feature>
<feature type="binding site" evidence="8 9">
    <location>
        <position position="411"/>
    </location>
    <ligand>
        <name>Zn(2+)</name>
        <dbReference type="ChEBI" id="CHEBI:29105"/>
        <label>2</label>
        <note>catalytic</note>
    </ligand>
</feature>
<feature type="site" description="Cleavage; by MMP3" evidence="13">
    <location>
        <begin position="59"/>
        <end position="60"/>
    </location>
</feature>
<feature type="site" description="Cleavage; by MMP3" evidence="13">
    <location>
        <begin position="106"/>
        <end position="107"/>
    </location>
</feature>
<feature type="glycosylation site" description="N-linked (GlcNAc...) asparagine" evidence="2">
    <location>
        <position position="38"/>
    </location>
</feature>
<feature type="glycosylation site" description="N-linked (GlcNAc...) asparagine" evidence="2">
    <location>
        <position position="120"/>
    </location>
</feature>
<feature type="glycosylation site" description="N-linked (GlcNAc...) asparagine" evidence="2">
    <location>
        <position position="127"/>
    </location>
</feature>
<feature type="disulfide bond" evidence="3">
    <location>
        <begin position="230"/>
        <end position="256"/>
    </location>
</feature>
<feature type="disulfide bond" evidence="3">
    <location>
        <begin position="244"/>
        <end position="271"/>
    </location>
</feature>
<feature type="disulfide bond" evidence="3">
    <location>
        <begin position="288"/>
        <end position="314"/>
    </location>
</feature>
<feature type="disulfide bond" evidence="3">
    <location>
        <begin position="302"/>
        <end position="329"/>
    </location>
</feature>
<feature type="disulfide bond" evidence="3">
    <location>
        <begin position="347"/>
        <end position="373"/>
    </location>
</feature>
<feature type="disulfide bond" evidence="3">
    <location>
        <begin position="361"/>
        <end position="388"/>
    </location>
</feature>
<feature type="disulfide bond" evidence="10">
    <location>
        <begin position="516"/>
        <end position="704"/>
    </location>
</feature>
<feature type="sequence variant" id="VAR_013780" description="In dbSNP:rs1805088." evidence="5 31 32">
    <original>A</original>
    <variation>V</variation>
    <location>
        <position position="20"/>
    </location>
</feature>
<feature type="sequence variant" id="VAR_037004" description="In dbSNP:rs41427445.">
    <original>N</original>
    <variation>S</variation>
    <location>
        <position position="38"/>
    </location>
</feature>
<feature type="sequence variant" id="VAR_013781" description="In dbSNP:rs1805089." evidence="5">
    <original>E</original>
    <variation>K</variation>
    <location>
        <position position="82"/>
    </location>
</feature>
<feature type="sequence variant" id="VAR_020054" description="In dbSNP:rs3918252." evidence="31">
    <original>N</original>
    <variation>K</variation>
    <location>
        <position position="127"/>
    </location>
</feature>
<feature type="sequence variant" id="VAR_025165" description="In dbSNP:rs28763886." evidence="32">
    <original>R</original>
    <variation>H</variation>
    <location>
        <position position="239"/>
    </location>
</feature>
<feature type="sequence variant" id="VAR_013782" description="Risk factor for IDD; dbSNP:rs17576." evidence="5 18 26 31">
    <original>Q</original>
    <variation>R</variation>
    <location>
        <position position="279"/>
    </location>
</feature>
<feature type="sequence variant" id="VAR_025166" description="In dbSNP:rs35691798." evidence="32">
    <original>F</original>
    <variation>V</variation>
    <location>
        <position position="571"/>
    </location>
</feature>
<feature type="sequence variant" id="VAR_024595" description="In dbSNP:rs2250889." evidence="16 18 26 31 32">
    <original>R</original>
    <variation>P</variation>
    <location>
        <position position="574"/>
    </location>
</feature>
<feature type="sequence variant" id="VAR_014742" description="In dbSNP:rs17577." evidence="31 32">
    <original>R</original>
    <variation>Q</variation>
    <location>
        <position position="668"/>
    </location>
</feature>
<feature type="mutagenesis site" description="Loss of activity." evidence="8">
    <original>E</original>
    <variation>Q</variation>
    <location>
        <position position="402"/>
    </location>
</feature>
<feature type="sequence conflict" description="In Ref. 3; BAG35956." evidence="36" ref="3">
    <original>F</original>
    <variation>L</variation>
    <location>
        <position position="110"/>
    </location>
</feature>
<feature type="helix" evidence="43">
    <location>
        <begin position="42"/>
        <end position="51"/>
    </location>
</feature>
<feature type="helix" evidence="43">
    <location>
        <begin position="54"/>
        <end position="60"/>
    </location>
</feature>
<feature type="strand" evidence="43">
    <location>
        <begin position="65"/>
        <end position="67"/>
    </location>
</feature>
<feature type="helix" evidence="43">
    <location>
        <begin position="68"/>
        <end position="78"/>
    </location>
</feature>
<feature type="helix" evidence="43">
    <location>
        <begin position="88"/>
        <end position="94"/>
    </location>
</feature>
<feature type="strand" evidence="43">
    <location>
        <begin position="103"/>
        <end position="105"/>
    </location>
</feature>
<feature type="strand" evidence="43">
    <location>
        <begin position="111"/>
        <end position="115"/>
    </location>
</feature>
<feature type="strand" evidence="44">
    <location>
        <begin position="117"/>
        <end position="125"/>
    </location>
</feature>
<feature type="strand" evidence="43">
    <location>
        <begin position="130"/>
        <end position="132"/>
    </location>
</feature>
<feature type="helix" evidence="44">
    <location>
        <begin position="134"/>
        <end position="149"/>
    </location>
</feature>
<feature type="strand" evidence="42">
    <location>
        <begin position="151"/>
        <end position="153"/>
    </location>
</feature>
<feature type="strand" evidence="44">
    <location>
        <begin position="155"/>
        <end position="158"/>
    </location>
</feature>
<feature type="strand" evidence="41">
    <location>
        <begin position="160"/>
        <end position="162"/>
    </location>
</feature>
<feature type="strand" evidence="44">
    <location>
        <begin position="165"/>
        <end position="171"/>
    </location>
</feature>
<feature type="strand" evidence="44">
    <location>
        <begin position="176"/>
        <end position="178"/>
    </location>
</feature>
<feature type="strand" evidence="44">
    <location>
        <begin position="183"/>
        <end position="186"/>
    </location>
</feature>
<feature type="strand" evidence="44">
    <location>
        <begin position="189"/>
        <end position="191"/>
    </location>
</feature>
<feature type="strand" evidence="44">
    <location>
        <begin position="194"/>
        <end position="196"/>
    </location>
</feature>
<feature type="turn" evidence="44">
    <location>
        <begin position="197"/>
        <end position="200"/>
    </location>
</feature>
<feature type="strand" evidence="44">
    <location>
        <begin position="202"/>
        <end position="205"/>
    </location>
</feature>
<feature type="strand" evidence="44">
    <location>
        <begin position="213"/>
        <end position="216"/>
    </location>
</feature>
<feature type="strand" evidence="39">
    <location>
        <begin position="221"/>
        <end position="225"/>
    </location>
</feature>
<feature type="strand" evidence="39">
    <location>
        <begin position="232"/>
        <end position="238"/>
    </location>
</feature>
<feature type="strand" evidence="39">
    <location>
        <begin position="240"/>
        <end position="243"/>
    </location>
</feature>
<feature type="strand" evidence="39">
    <location>
        <begin position="255"/>
        <end position="261"/>
    </location>
</feature>
<feature type="helix" evidence="39">
    <location>
        <begin position="262"/>
        <end position="265"/>
    </location>
</feature>
<feature type="strand" evidence="39">
    <location>
        <begin position="268"/>
        <end position="270"/>
    </location>
</feature>
<feature type="turn" evidence="39">
    <location>
        <begin position="274"/>
        <end position="276"/>
    </location>
</feature>
<feature type="strand" evidence="39">
    <location>
        <begin position="279"/>
        <end position="283"/>
    </location>
</feature>
<feature type="strand" evidence="39">
    <location>
        <begin position="290"/>
        <end position="294"/>
    </location>
</feature>
<feature type="strand" evidence="39">
    <location>
        <begin position="297"/>
        <end position="301"/>
    </location>
</feature>
<feature type="strand" evidence="39">
    <location>
        <begin position="313"/>
        <end position="319"/>
    </location>
</feature>
<feature type="helix" evidence="39">
    <location>
        <begin position="320"/>
        <end position="323"/>
    </location>
</feature>
<feature type="strand" evidence="39">
    <location>
        <begin position="326"/>
        <end position="328"/>
    </location>
</feature>
<feature type="helix" evidence="39">
    <location>
        <begin position="333"/>
        <end position="335"/>
    </location>
</feature>
<feature type="turn" evidence="39">
    <location>
        <begin position="340"/>
        <end position="344"/>
    </location>
</feature>
<feature type="strand" evidence="39">
    <location>
        <begin position="349"/>
        <end position="353"/>
    </location>
</feature>
<feature type="strand" evidence="39">
    <location>
        <begin position="356"/>
        <end position="358"/>
    </location>
</feature>
<feature type="strand" evidence="39">
    <location>
        <begin position="372"/>
        <end position="378"/>
    </location>
</feature>
<feature type="helix" evidence="39">
    <location>
        <begin position="379"/>
        <end position="382"/>
    </location>
</feature>
<feature type="strand" evidence="39">
    <location>
        <begin position="385"/>
        <end position="387"/>
    </location>
</feature>
<feature type="strand" evidence="44">
    <location>
        <begin position="392"/>
        <end position="394"/>
    </location>
</feature>
<feature type="helix" evidence="44">
    <location>
        <begin position="395"/>
        <end position="406"/>
    </location>
</feature>
<feature type="strand" evidence="44">
    <location>
        <begin position="420"/>
        <end position="422"/>
    </location>
</feature>
<feature type="strand" evidence="40">
    <location>
        <begin position="427"/>
        <end position="429"/>
    </location>
</feature>
<feature type="helix" evidence="44">
    <location>
        <begin position="433"/>
        <end position="443"/>
    </location>
</feature>
<feature type="helix" evidence="38">
    <location>
        <begin position="515"/>
        <end position="517"/>
    </location>
</feature>
<feature type="strand" evidence="38">
    <location>
        <begin position="522"/>
        <end position="527"/>
    </location>
</feature>
<feature type="strand" evidence="38">
    <location>
        <begin position="530"/>
        <end position="535"/>
    </location>
</feature>
<feature type="strand" evidence="38">
    <location>
        <begin position="538"/>
        <end position="542"/>
    </location>
</feature>
<feature type="strand" evidence="38">
    <location>
        <begin position="545"/>
        <end position="547"/>
    </location>
</feature>
<feature type="strand" evidence="38">
    <location>
        <begin position="551"/>
        <end position="555"/>
    </location>
</feature>
<feature type="helix" evidence="38">
    <location>
        <begin position="556"/>
        <end position="559"/>
    </location>
</feature>
<feature type="strand" evidence="38">
    <location>
        <begin position="568"/>
        <end position="572"/>
    </location>
</feature>
<feature type="turn" evidence="38">
    <location>
        <begin position="574"/>
        <end position="576"/>
    </location>
</feature>
<feature type="strand" evidence="38">
    <location>
        <begin position="579"/>
        <end position="583"/>
    </location>
</feature>
<feature type="strand" evidence="38">
    <location>
        <begin position="586"/>
        <end position="591"/>
    </location>
</feature>
<feature type="strand" evidence="38">
    <location>
        <begin position="594"/>
        <end position="600"/>
    </location>
</feature>
<feature type="helix" evidence="38">
    <location>
        <begin position="601"/>
        <end position="604"/>
    </location>
</feature>
<feature type="strand" evidence="38">
    <location>
        <begin position="615"/>
        <end position="618"/>
    </location>
</feature>
<feature type="strand" evidence="38">
    <location>
        <begin position="623"/>
        <end position="628"/>
    </location>
</feature>
<feature type="strand" evidence="38">
    <location>
        <begin position="631"/>
        <end position="636"/>
    </location>
</feature>
<feature type="turn" evidence="38">
    <location>
        <begin position="637"/>
        <end position="640"/>
    </location>
</feature>
<feature type="helix" evidence="38">
    <location>
        <begin position="644"/>
        <end position="646"/>
    </location>
</feature>
<feature type="helix" evidence="38">
    <location>
        <begin position="650"/>
        <end position="653"/>
    </location>
</feature>
<feature type="strand" evidence="38">
    <location>
        <begin position="662"/>
        <end position="667"/>
    </location>
</feature>
<feature type="strand" evidence="38">
    <location>
        <begin position="670"/>
        <end position="675"/>
    </location>
</feature>
<feature type="strand" evidence="38">
    <location>
        <begin position="678"/>
        <end position="683"/>
    </location>
</feature>
<feature type="strand" evidence="38">
    <location>
        <begin position="690"/>
        <end position="696"/>
    </location>
</feature>
<feature type="turn" evidence="38">
    <location>
        <begin position="697"/>
        <end position="700"/>
    </location>
</feature>
<keyword id="KW-0002">3D-structure</keyword>
<keyword id="KW-0106">Calcium</keyword>
<keyword id="KW-0177">Collagen degradation</keyword>
<keyword id="KW-0903">Direct protein sequencing</keyword>
<keyword id="KW-1015">Disulfide bond</keyword>
<keyword id="KW-0272">Extracellular matrix</keyword>
<keyword id="KW-0325">Glycoprotein</keyword>
<keyword id="KW-0378">Hydrolase</keyword>
<keyword id="KW-0479">Metal-binding</keyword>
<keyword id="KW-0482">Metalloprotease</keyword>
<keyword id="KW-0645">Protease</keyword>
<keyword id="KW-1267">Proteomics identification</keyword>
<keyword id="KW-1185">Reference proteome</keyword>
<keyword id="KW-0677">Repeat</keyword>
<keyword id="KW-0964">Secreted</keyword>
<keyword id="KW-0732">Signal</keyword>
<keyword id="KW-0862">Zinc</keyword>
<keyword id="KW-0865">Zymogen</keyword>
<organism>
    <name type="scientific">Homo sapiens</name>
    <name type="common">Human</name>
    <dbReference type="NCBI Taxonomy" id="9606"/>
    <lineage>
        <taxon>Eukaryota</taxon>
        <taxon>Metazoa</taxon>
        <taxon>Chordata</taxon>
        <taxon>Craniata</taxon>
        <taxon>Vertebrata</taxon>
        <taxon>Euteleostomi</taxon>
        <taxon>Mammalia</taxon>
        <taxon>Eutheria</taxon>
        <taxon>Euarchontoglires</taxon>
        <taxon>Primates</taxon>
        <taxon>Haplorrhini</taxon>
        <taxon>Catarrhini</taxon>
        <taxon>Hominidae</taxon>
        <taxon>Homo</taxon>
    </lineage>
</organism>